<feature type="initiator methionine" description="Removed" evidence="14 19 20 21">
    <location>
        <position position="1"/>
    </location>
</feature>
<feature type="chain" id="PRO_0000132739" description="DNA-directed RNA polymerases I and III subunit RPAC1">
    <location>
        <begin position="2"/>
        <end position="346"/>
    </location>
</feature>
<feature type="modified residue" description="N-acetylalanine" evidence="14 19 20 21">
    <location>
        <position position="2"/>
    </location>
</feature>
<feature type="modified residue" description="Phosphoserine" evidence="22">
    <location>
        <position position="4"/>
    </location>
</feature>
<feature type="splice variant" id="VSP_005913" description="In isoform 2." evidence="15">
    <original>FSVESTGVLPPDVLVSEAIKVLMGKCRRFLDELDAVQMD</original>
    <variation>CKKDLLAAVAHTCNPSTLGGQGEWITGSRERDHPG</variation>
    <location>
        <begin position="308"/>
        <end position="346"/>
    </location>
</feature>
<feature type="sequence variant" id="VAR_074655" description="In HLD11; dbSNP:rs796052126." evidence="5">
    <original>T</original>
    <variation>I</variation>
    <location>
        <position position="26"/>
    </location>
</feature>
<feature type="sequence variant" id="VAR_074656" description="In HLD11; decreased localization to the nucleus and retained in the cytoplasm; loss of association with RNA polymerase III-transcribed genes; decreased association with RNA polymerase III complex; probably prevents RNA polymerase III complex assembly and activity; dbSNP:rs796052124." evidence="5">
    <original>N</original>
    <variation>I</variation>
    <location>
        <position position="32"/>
    </location>
</feature>
<feature type="sequence variant" id="VAR_074657" description="In HLD11; dbSNP:rs141471029." evidence="5">
    <original>M</original>
    <variation>V</variation>
    <location>
        <position position="65"/>
    </location>
</feature>
<feature type="sequence variant" id="VAR_074658" description="In HLD11; decreased localization to the nucleus and retained in the cytoplasm; loss of association with RNA polymerase III-transcribed genes; decreased association with RNA polymerase III complex; probably prevents RNA polymerase III complex assembly and activity; dbSNP:rs371802902." evidence="5">
    <original>N</original>
    <variation>S</variation>
    <location>
        <position position="74"/>
    </location>
</feature>
<feature type="sequence variant" id="VAR_074659" description="In HLD11; dbSNP:rs1305006253." evidence="5">
    <original>V</original>
    <variation>A</variation>
    <location>
        <position position="94"/>
    </location>
</feature>
<feature type="sequence variant" id="VAR_074660" description="In HLD11; dbSNP:rs796052127." evidence="5">
    <original>R</original>
    <variation>H</variation>
    <location>
        <position position="109"/>
    </location>
</feature>
<feature type="sequence variant" id="VAR_074661" description="In HLD11; dbSNP:rs201320592." evidence="5">
    <original>G</original>
    <variation>D</variation>
    <location>
        <position position="132"/>
    </location>
</feature>
<feature type="sequence variant" id="VAR_074662" description="In HLD11; dbSNP:rs796052125." evidence="5">
    <original>C</original>
    <variation>R</variation>
    <location>
        <position position="146"/>
    </location>
</feature>
<feature type="sequence variant" id="VAR_074663" description="In HLD11; dbSNP:rs373046018." evidence="5">
    <original>R</original>
    <variation>Q</variation>
    <location>
        <position position="191"/>
    </location>
</feature>
<feature type="sequence variant" id="VAR_074664" description="In HLD11; dbSNP:rs751006626." evidence="5">
    <original>I</original>
    <variation>T</variation>
    <location>
        <position position="262"/>
    </location>
</feature>
<feature type="sequence variant" id="VAR_064899" description="In TCS3; no effect on localization to the nucleus; no effect on association with RNA polymerase I and RNA polymerase III complexes; dbSNP:rs191582628." evidence="4 5">
    <original>R</original>
    <variation>Q</variation>
    <location>
        <position position="279"/>
    </location>
</feature>
<feature type="sequence variant" id="VAR_064900" description="In TCS3; dbSNP:rs141156009." evidence="4">
    <original>R</original>
    <variation>W</variation>
    <location>
        <position position="279"/>
    </location>
</feature>
<feature type="sequence variant" id="VAR_074665" description="In HLD11; dbSNP:rs875989826." evidence="5">
    <location>
        <position position="295"/>
    </location>
</feature>
<feature type="sequence variant" id="VAR_074666" description="In HLD11; dbSNP:rs1582184344." evidence="5">
    <original>E</original>
    <variation>K</variation>
    <location>
        <position position="324"/>
    </location>
</feature>
<feature type="helix" evidence="23">
    <location>
        <begin position="3"/>
        <end position="10"/>
    </location>
</feature>
<feature type="strand" evidence="23">
    <location>
        <begin position="13"/>
        <end position="16"/>
    </location>
</feature>
<feature type="strand" evidence="23">
    <location>
        <begin position="21"/>
        <end position="23"/>
    </location>
</feature>
<feature type="strand" evidence="23">
    <location>
        <begin position="32"/>
        <end position="35"/>
    </location>
</feature>
<feature type="helix" evidence="26">
    <location>
        <begin position="42"/>
        <end position="48"/>
    </location>
</feature>
<feature type="strand" evidence="26">
    <location>
        <begin position="50"/>
        <end position="57"/>
    </location>
</feature>
<feature type="strand" evidence="26">
    <location>
        <begin position="60"/>
        <end position="67"/>
    </location>
</feature>
<feature type="helix" evidence="26">
    <location>
        <begin position="70"/>
        <end position="82"/>
    </location>
</feature>
<feature type="strand" evidence="26">
    <location>
        <begin position="86"/>
        <end position="97"/>
    </location>
</feature>
<feature type="strand" evidence="26">
    <location>
        <begin position="99"/>
        <end position="101"/>
    </location>
</feature>
<feature type="helix" evidence="26">
    <location>
        <begin position="103"/>
        <end position="111"/>
    </location>
</feature>
<feature type="strand" evidence="25">
    <location>
        <begin position="115"/>
        <end position="117"/>
    </location>
</feature>
<feature type="helix" evidence="26">
    <location>
        <begin position="119"/>
        <end position="121"/>
    </location>
</feature>
<feature type="turn" evidence="26">
    <location>
        <begin position="134"/>
        <end position="136"/>
    </location>
</feature>
<feature type="strand" evidence="26">
    <location>
        <begin position="138"/>
        <end position="145"/>
    </location>
</feature>
<feature type="strand" evidence="24">
    <location>
        <begin position="150"/>
        <end position="152"/>
    </location>
</feature>
<feature type="helix" evidence="26">
    <location>
        <begin position="159"/>
        <end position="162"/>
    </location>
</feature>
<feature type="strand" evidence="26">
    <location>
        <begin position="163"/>
        <end position="165"/>
    </location>
</feature>
<feature type="strand" evidence="23">
    <location>
        <begin position="167"/>
        <end position="169"/>
    </location>
</feature>
<feature type="helix" evidence="26">
    <location>
        <begin position="170"/>
        <end position="172"/>
    </location>
</feature>
<feature type="strand" evidence="26">
    <location>
        <begin position="173"/>
        <end position="175"/>
    </location>
</feature>
<feature type="helix" evidence="26">
    <location>
        <begin position="181"/>
        <end position="184"/>
    </location>
</feature>
<feature type="turn" evidence="26">
    <location>
        <begin position="187"/>
        <end position="189"/>
    </location>
</feature>
<feature type="strand" evidence="26">
    <location>
        <begin position="190"/>
        <end position="193"/>
    </location>
</feature>
<feature type="strand" evidence="23">
    <location>
        <begin position="198"/>
        <end position="201"/>
    </location>
</feature>
<feature type="strand" evidence="26">
    <location>
        <begin position="207"/>
        <end position="217"/>
    </location>
</feature>
<feature type="turn" evidence="26">
    <location>
        <begin position="219"/>
        <end position="221"/>
    </location>
</feature>
<feature type="helix" evidence="26">
    <location>
        <begin position="223"/>
        <end position="225"/>
    </location>
</feature>
<feature type="strand" evidence="26">
    <location>
        <begin position="228"/>
        <end position="232"/>
    </location>
</feature>
<feature type="strand" evidence="26">
    <location>
        <begin position="235"/>
        <end position="243"/>
    </location>
</feature>
<feature type="helix" evidence="26">
    <location>
        <begin position="248"/>
        <end position="255"/>
    </location>
</feature>
<feature type="strand" evidence="26">
    <location>
        <begin position="261"/>
        <end position="275"/>
    </location>
</feature>
<feature type="helix" evidence="26">
    <location>
        <begin position="278"/>
        <end position="280"/>
    </location>
</feature>
<feature type="helix" evidence="26">
    <location>
        <begin position="286"/>
        <end position="288"/>
    </location>
</feature>
<feature type="strand" evidence="27">
    <location>
        <begin position="289"/>
        <end position="291"/>
    </location>
</feature>
<feature type="helix" evidence="26">
    <location>
        <begin position="293"/>
        <end position="295"/>
    </location>
</feature>
<feature type="strand" evidence="26">
    <location>
        <begin position="297"/>
        <end position="312"/>
    </location>
</feature>
<feature type="strand" evidence="26">
    <location>
        <begin position="314"/>
        <end position="316"/>
    </location>
</feature>
<feature type="helix" evidence="26">
    <location>
        <begin position="318"/>
        <end position="343"/>
    </location>
</feature>
<gene>
    <name evidence="18" type="primary">POLR1C</name>
    <name type="synonym">POLR1E</name>
</gene>
<sequence length="346" mass="39250">MAASQAVEEMRSRVVLGEFGVRNVHTTDFPGNYSGYDDAWDQDRFEKNFRVDVVHMDENSLEFDMVGIDAAIANAFRRILLAEVPTMAVEKVLVYNNTSIVQDEILAHRLGLIPIHADPRLFEYRNQGDEEGTEIDTLQFRLQVRCTRNPHAAKDSSDPNELYVNHKVYTRHMTWIPLGNQADLFPEGTIRPVHDDILIAQLRPGQEIDLLMHCVKGIGKDHAKFSPVATASYRLLPDITLLEPVEGEAAEELSRCFSPGVIEVQEVQGKKVARVANPRLDTFSREIFRNEKLKKVVRLARVRDHYIFSVESTGVLPPDVLVSEAIKVLMGKCRRFLDELDAVQMD</sequence>
<keyword id="KW-0002">3D-structure</keyword>
<keyword id="KW-0007">Acetylation</keyword>
<keyword id="KW-0025">Alternative splicing</keyword>
<keyword id="KW-0963">Cytoplasm</keyword>
<keyword id="KW-0903">Direct protein sequencing</keyword>
<keyword id="KW-0225">Disease variant</keyword>
<keyword id="KW-0240">DNA-directed RNA polymerase</keyword>
<keyword id="KW-1026">Leukodystrophy</keyword>
<keyword id="KW-0539">Nucleus</keyword>
<keyword id="KW-0597">Phosphoprotein</keyword>
<keyword id="KW-1267">Proteomics identification</keyword>
<keyword id="KW-1185">Reference proteome</keyword>
<keyword id="KW-0804">Transcription</keyword>
<proteinExistence type="evidence at protein level"/>
<comment type="function">
    <text evidence="1 3 10 12 13 17">DNA-dependent RNA polymerase catalyzes the transcription of DNA into RNA using the four ribonucleoside triphosphates as substrates. Common component of RNA polymerases I and III which synthesize ribosomal RNA precursors and short non-coding RNAs including 5S rRNA, snRNAs, tRNAs and miRNAs, respectively. POLR1C/RPAC1 is part of the polymerase core and may function as a clamp element that moves to open and close the cleft.</text>
</comment>
<comment type="subunit">
    <text evidence="2 5 6 7 8 9 10 11 12 13">Component of the RNA polymerase I and RNA polymerase III complexes consisting of at least 13 and 17 subunits, respectively (PubMed:12391170, PubMed:26151409, PubMed:33335104). Pol I complex consists of a ten-subunit catalytic core composed of POLR1A/RPA1, POLR1B/RPA2, POLR1C/RPAC1, POLR1D/RPAC2, POLR1H/RPA12, POLR2E/RPABC1, POLR2F/RPABC2, POLR2H/RPABC3, POLR2K/RPABC4 and POLR2L/RPABC5; a mobile stalk subunit POLR1F/RPA43 protruding from the core and additional subunits homologous to general transcription factors POLR1E/RPA49 and POLR1G/RPA34. Part of Pol I pre-initiation complex (PIC), in which Pol I core assembles with RRN3 and promoter-bound UTBF and SL1/TIF-IB complex (PubMed:34671025, PubMed:34887565, PubMed:36271492). Pol III complex consists of a ten-subunit catalytic core composed of POLR3A/RPC1, POLR3B/RPC2, POLR1C/RPAC1, POLR1D/RPAC2, POLR3K/RPC10, POLR2E/RPABC1, POLR2F/RPABC2, POLR2H/RPABC3, POLR2K/RPABC4 and POLR2L/RPABC5; a mobile stalk composed of two subunits POLR3H/RPC8 and CRCP/RPC9, protruding from the core and functioning primarily in transcription initiation; and additional subunits homologous to general transcription factors of the RNA polymerase II machinery, POLR3C/RPC3-POLR3F/RPC6-POLR3G/RPC7 heterotrimer required for transcription initiation and POLR3D/RPC4-POLR3E/RPC5 heterodimer involved in both transcription initiation and termination (PubMed:12391170, PubMed:33335104, PubMed:33558764, PubMed:33558766, PubMed:33674783, PubMed:34675218).</text>
</comment>
<comment type="interaction">
    <interactant intactId="EBI-1055079">
        <id>O15160</id>
    </interactant>
    <interactant intactId="EBI-10173507">
        <id>Q6UY14-3</id>
        <label>ADAMTSL4</label>
    </interactant>
    <organismsDiffer>false</organismsDiffer>
    <experiments>3</experiments>
</comment>
<comment type="interaction">
    <interactant intactId="EBI-1055079">
        <id>O15160</id>
    </interactant>
    <interactant intactId="EBI-602199">
        <id>Q12774</id>
        <label>ARHGEF5</label>
    </interactant>
    <organismsDiffer>false</organismsDiffer>
    <experiments>5</experiments>
</comment>
<comment type="interaction">
    <interactant intactId="EBI-1055079">
        <id>O15160</id>
    </interactant>
    <interactant intactId="EBI-747353">
        <id>Q8WXE1</id>
        <label>ATRIP</label>
    </interactant>
    <organismsDiffer>false</organismsDiffer>
    <experiments>3</experiments>
</comment>
<comment type="interaction">
    <interactant intactId="EBI-1055079">
        <id>O15160</id>
    </interactant>
    <interactant intactId="EBI-8640233">
        <id>Q5T686</id>
        <label>AVPI1</label>
    </interactant>
    <organismsDiffer>false</organismsDiffer>
    <experiments>3</experiments>
</comment>
<comment type="interaction">
    <interactant intactId="EBI-1055079">
        <id>O15160</id>
    </interactant>
    <interactant intactId="EBI-2653038">
        <id>Q9NQY0</id>
        <label>BIN3</label>
    </interactant>
    <organismsDiffer>false</organismsDiffer>
    <experiments>3</experiments>
</comment>
<comment type="interaction">
    <interactant intactId="EBI-1055079">
        <id>O15160</id>
    </interactant>
    <interactant intactId="EBI-517623">
        <id>Q96CA5</id>
        <label>BIRC7</label>
    </interactant>
    <organismsDiffer>false</organismsDiffer>
    <experiments>6</experiments>
</comment>
<comment type="interaction">
    <interactant intactId="EBI-1055079">
        <id>O15160</id>
    </interactant>
    <interactant intactId="EBI-2548012">
        <id>Q9H2G9</id>
        <label>BLZF1</label>
    </interactant>
    <organismsDiffer>false</organismsDiffer>
    <experiments>3</experiments>
</comment>
<comment type="interaction">
    <interactant intactId="EBI-1055079">
        <id>O15160</id>
    </interactant>
    <interactant intactId="EBI-10191951">
        <id>O95561</id>
        <label>C1orf105</label>
    </interactant>
    <organismsDiffer>false</organismsDiffer>
    <experiments>3</experiments>
</comment>
<comment type="interaction">
    <interactant intactId="EBI-1055079">
        <id>O15160</id>
    </interactant>
    <interactant intactId="EBI-10226774">
        <id>Q0VAL7</id>
        <label>C21orf58</label>
    </interactant>
    <organismsDiffer>false</organismsDiffer>
    <experiments>3</experiments>
</comment>
<comment type="interaction">
    <interactant intactId="EBI-1055079">
        <id>O15160</id>
    </interactant>
    <interactant intactId="EBI-712912">
        <id>Q9HC52</id>
        <label>CBX8</label>
    </interactant>
    <organismsDiffer>false</organismsDiffer>
    <experiments>3</experiments>
</comment>
<comment type="interaction">
    <interactant intactId="EBI-1055079">
        <id>O15160</id>
    </interactant>
    <interactant intactId="EBI-11524851">
        <id>Q8NA61-2</id>
        <label>CBY2</label>
    </interactant>
    <organismsDiffer>false</organismsDiffer>
    <experiments>5</experiments>
</comment>
<comment type="interaction">
    <interactant intactId="EBI-1055079">
        <id>O15160</id>
    </interactant>
    <interactant intactId="EBI-12010594">
        <id>O75909-2</id>
        <label>CCNK</label>
    </interactant>
    <organismsDiffer>false</organismsDiffer>
    <experiments>3</experiments>
</comment>
<comment type="interaction">
    <interactant intactId="EBI-1055079">
        <id>O15160</id>
    </interactant>
    <interactant intactId="EBI-356673">
        <id>P49368</id>
        <label>CCT3</label>
    </interactant>
    <organismsDiffer>false</organismsDiffer>
    <experiments>3</experiments>
</comment>
<comment type="interaction">
    <interactant intactId="EBI-1055079">
        <id>O15160</id>
    </interactant>
    <interactant intactId="EBI-723153">
        <id>Q9UFW8</id>
        <label>CGGBP1</label>
    </interactant>
    <organismsDiffer>false</organismsDiffer>
    <experiments>3</experiments>
</comment>
<comment type="interaction">
    <interactant intactId="EBI-1055079">
        <id>O15160</id>
    </interactant>
    <interactant intactId="EBI-739773">
        <id>Q9BSW2</id>
        <label>CRACR2A</label>
    </interactant>
    <organismsDiffer>false</organismsDiffer>
    <experiments>3</experiments>
</comment>
<comment type="interaction">
    <interactant intactId="EBI-1055079">
        <id>O15160</id>
    </interactant>
    <interactant intactId="EBI-6875961">
        <id>P02489</id>
        <label>CRYAA</label>
    </interactant>
    <organismsDiffer>false</organismsDiffer>
    <experiments>3</experiments>
</comment>
<comment type="interaction">
    <interactant intactId="EBI-1055079">
        <id>O15160</id>
    </interactant>
    <interactant intactId="EBI-2349927">
        <id>Q5JST6</id>
        <label>EFHC2</label>
    </interactant>
    <organismsDiffer>false</organismsDiffer>
    <experiments>3</experiments>
</comment>
<comment type="interaction">
    <interactant intactId="EBI-1055079">
        <id>O15160</id>
    </interactant>
    <interactant intactId="EBI-12089140">
        <id>A0A0A0MR80</id>
        <label>EP400</label>
    </interactant>
    <organismsDiffer>false</organismsDiffer>
    <experiments>3</experiments>
</comment>
<comment type="interaction">
    <interactant intactId="EBI-1055079">
        <id>O15160</id>
    </interactant>
    <interactant intactId="EBI-1050358">
        <id>P07954</id>
        <label>FH</label>
    </interactant>
    <organismsDiffer>false</organismsDiffer>
    <experiments>3</experiments>
</comment>
<comment type="interaction">
    <interactant intactId="EBI-1055079">
        <id>O15160</id>
    </interactant>
    <interactant intactId="EBI-11976595">
        <id>Q8IXW7</id>
        <label>FMR1</label>
    </interactant>
    <organismsDiffer>false</organismsDiffer>
    <experiments>3</experiments>
</comment>
<comment type="interaction">
    <interactant intactId="EBI-1055079">
        <id>O15160</id>
    </interactant>
    <interactant intactId="EBI-8468543">
        <id>Q6PJQ5</id>
        <label>FOXR2</label>
    </interactant>
    <organismsDiffer>false</organismsDiffer>
    <experiments>3</experiments>
</comment>
<comment type="interaction">
    <interactant intactId="EBI-1055079">
        <id>O15160</id>
    </interactant>
    <interactant intactId="EBI-1052570">
        <id>O95995</id>
        <label>GAS8</label>
    </interactant>
    <organismsDiffer>false</organismsDiffer>
    <experiments>3</experiments>
</comment>
<comment type="interaction">
    <interactant intactId="EBI-1055079">
        <id>O15160</id>
    </interactant>
    <interactant intactId="EBI-750945">
        <id>Q9Y5P6</id>
        <label>GMPPB</label>
    </interactant>
    <organismsDiffer>false</organismsDiffer>
    <experiments>3</experiments>
</comment>
<comment type="interaction">
    <interactant intactId="EBI-1055079">
        <id>O15160</id>
    </interactant>
    <interactant intactId="EBI-11163335">
        <id>Q9NYA3</id>
        <label>GOLGA6A</label>
    </interactant>
    <organismsDiffer>false</organismsDiffer>
    <experiments>3</experiments>
</comment>
<comment type="interaction">
    <interactant intactId="EBI-1055079">
        <id>O15160</id>
    </interactant>
    <interactant intactId="EBI-5916454">
        <id>A6NEM1</id>
        <label>GOLGA6L9</label>
    </interactant>
    <organismsDiffer>false</organismsDiffer>
    <experiments>3</experiments>
</comment>
<comment type="interaction">
    <interactant intactId="EBI-1055079">
        <id>O15160</id>
    </interactant>
    <interactant intactId="EBI-11519926">
        <id>Q6PI77</id>
        <label>GPRASP3</label>
    </interactant>
    <organismsDiffer>false</organismsDiffer>
    <experiments>3</experiments>
</comment>
<comment type="interaction">
    <interactant intactId="EBI-1055079">
        <id>O15160</id>
    </interactant>
    <interactant intactId="EBI-1043499">
        <id>Q9HAV7</id>
        <label>GRPEL1</label>
    </interactant>
    <organismsDiffer>false</organismsDiffer>
    <experiments>4</experiments>
</comment>
<comment type="interaction">
    <interactant intactId="EBI-1055079">
        <id>O15160</id>
    </interactant>
    <interactant intactId="EBI-10194609">
        <id>Q9H4Y5</id>
        <label>GSTO2</label>
    </interactant>
    <organismsDiffer>false</organismsDiffer>
    <experiments>3</experiments>
</comment>
<comment type="interaction">
    <interactant intactId="EBI-1055079">
        <id>O15160</id>
    </interactant>
    <interactant intactId="EBI-1052734">
        <id>Q7Z353</id>
        <label>HDX</label>
    </interactant>
    <organismsDiffer>false</organismsDiffer>
    <experiments>3</experiments>
</comment>
<comment type="interaction">
    <interactant intactId="EBI-1055079">
        <id>O15160</id>
    </interactant>
    <interactant intactId="EBI-351590">
        <id>P31943</id>
        <label>HNRNPH1</label>
    </interactant>
    <organismsDiffer>false</organismsDiffer>
    <experiments>4</experiments>
</comment>
<comment type="interaction">
    <interactant intactId="EBI-1055079">
        <id>O15160</id>
    </interactant>
    <interactant intactId="EBI-745290">
        <id>P17482</id>
        <label>HOXB9</label>
    </interactant>
    <organismsDiffer>false</organismsDiffer>
    <experiments>3</experiments>
</comment>
<comment type="interaction">
    <interactant intactId="EBI-1055079">
        <id>O15160</id>
    </interactant>
    <interactant intactId="EBI-17244356">
        <id>P35452-2</id>
        <label>HOXD12</label>
    </interactant>
    <organismsDiffer>false</organismsDiffer>
    <experiments>3</experiments>
</comment>
<comment type="interaction">
    <interactant intactId="EBI-1055079">
        <id>O15160</id>
    </interactant>
    <interactant intactId="EBI-8638439">
        <id>Q8IYA8</id>
        <label>IHO1</label>
    </interactant>
    <organismsDiffer>false</organismsDiffer>
    <experiments>3</experiments>
</comment>
<comment type="interaction">
    <interactant intactId="EBI-1055079">
        <id>O15160</id>
    </interactant>
    <interactant intactId="EBI-747204">
        <id>Q9UKT9</id>
        <label>IKZF3</label>
    </interactant>
    <organismsDiffer>false</organismsDiffer>
    <experiments>9</experiments>
</comment>
<comment type="interaction">
    <interactant intactId="EBI-1055079">
        <id>O15160</id>
    </interactant>
    <interactant intactId="EBI-6509505">
        <id>Q0VD86</id>
        <label>INCA1</label>
    </interactant>
    <organismsDiffer>false</organismsDiffer>
    <experiments>3</experiments>
</comment>
<comment type="interaction">
    <interactant intactId="EBI-1055079">
        <id>O15160</id>
    </interactant>
    <interactant intactId="EBI-9027502">
        <id>Q719H9</id>
        <label>KCTD1</label>
    </interactant>
    <organismsDiffer>false</organismsDiffer>
    <experiments>6</experiments>
</comment>
<comment type="interaction">
    <interactant intactId="EBI-1055079">
        <id>O15160</id>
    </interactant>
    <interactant intactId="EBI-742916">
        <id>Q8WZ19</id>
        <label>KCTD13</label>
    </interactant>
    <organismsDiffer>false</organismsDiffer>
    <experiments>3</experiments>
</comment>
<comment type="interaction">
    <interactant intactId="EBI-1055079">
        <id>O15160</id>
    </interactant>
    <interactant intactId="EBI-2796400">
        <id>Q9UIH9</id>
        <label>KLF15</label>
    </interactant>
    <organismsDiffer>false</organismsDiffer>
    <experiments>3</experiments>
</comment>
<comment type="interaction">
    <interactant intactId="EBI-1055079">
        <id>O15160</id>
    </interactant>
    <interactant intactId="EBI-742756">
        <id>P08727</id>
        <label>KRT19</label>
    </interactant>
    <organismsDiffer>false</organismsDiffer>
    <experiments>3</experiments>
</comment>
<comment type="interaction">
    <interactant intactId="EBI-1055079">
        <id>O15160</id>
    </interactant>
    <interactant intactId="EBI-2949715">
        <id>O95678</id>
        <label>KRT75</label>
    </interactant>
    <organismsDiffer>false</organismsDiffer>
    <experiments>3</experiments>
</comment>
<comment type="interaction">
    <interactant intactId="EBI-1055079">
        <id>O15160</id>
    </interactant>
    <interactant intactId="EBI-2952745">
        <id>Q01546</id>
        <label>KRT76</label>
    </interactant>
    <organismsDiffer>false</organismsDiffer>
    <experiments>5</experiments>
</comment>
<comment type="interaction">
    <interactant intactId="EBI-1055079">
        <id>O15160</id>
    </interactant>
    <interactant intactId="EBI-10176379">
        <id>P59991</id>
        <label>KRTAP12-2</label>
    </interactant>
    <organismsDiffer>false</organismsDiffer>
    <experiments>3</experiments>
</comment>
<comment type="interaction">
    <interactant intactId="EBI-1055079">
        <id>O15160</id>
    </interactant>
    <interactant intactId="EBI-9996449">
        <id>Q9BYR8</id>
        <label>KRTAP3-1</label>
    </interactant>
    <organismsDiffer>false</organismsDiffer>
    <experiments>3</experiments>
</comment>
<comment type="interaction">
    <interactant intactId="EBI-1055079">
        <id>O15160</id>
    </interactant>
    <interactant intactId="EBI-473196">
        <id>Q5T3J3</id>
        <label>LRIF1</label>
    </interactant>
    <organismsDiffer>false</organismsDiffer>
    <experiments>3</experiments>
</comment>
<comment type="interaction">
    <interactant intactId="EBI-1055079">
        <id>O15160</id>
    </interactant>
    <interactant intactId="EBI-1216080">
        <id>Q9Y250</id>
        <label>LZTS1</label>
    </interactant>
    <organismsDiffer>false</organismsDiffer>
    <experiments>3</experiments>
</comment>
<comment type="interaction">
    <interactant intactId="EBI-1055079">
        <id>O15160</id>
    </interactant>
    <interactant intactId="EBI-741037">
        <id>Q9BRK4</id>
        <label>LZTS2</label>
    </interactant>
    <organismsDiffer>false</organismsDiffer>
    <experiments>3</experiments>
</comment>
<comment type="interaction">
    <interactant intactId="EBI-1055079">
        <id>O15160</id>
    </interactant>
    <interactant intactId="EBI-10182361">
        <id>Q9NS73-5</id>
        <label>MBIP</label>
    </interactant>
    <organismsDiffer>false</organismsDiffer>
    <experiments>3</experiments>
</comment>
<comment type="interaction">
    <interactant intactId="EBI-1055079">
        <id>O15160</id>
    </interactant>
    <interactant intactId="EBI-19944212">
        <id>A8MW99</id>
        <label>MEI4</label>
    </interactant>
    <organismsDiffer>false</organismsDiffer>
    <experiments>3</experiments>
</comment>
<comment type="interaction">
    <interactant intactId="EBI-1055079">
        <id>O15160</id>
    </interactant>
    <interactant intactId="EBI-16439278">
        <id>Q6FHY5</id>
        <label>MEOX2</label>
    </interactant>
    <organismsDiffer>false</organismsDiffer>
    <experiments>3</experiments>
</comment>
<comment type="interaction">
    <interactant intactId="EBI-1055079">
        <id>O15160</id>
    </interactant>
    <interactant intactId="EBI-2340269">
        <id>Q13064</id>
        <label>MKRN3</label>
    </interactant>
    <organismsDiffer>false</organismsDiffer>
    <experiments>5</experiments>
</comment>
<comment type="interaction">
    <interactant intactId="EBI-1055079">
        <id>O15160</id>
    </interactant>
    <interactant intactId="EBI-9675802">
        <id>Q6PF18</id>
        <label>MORN3</label>
    </interactant>
    <organismsDiffer>false</organismsDiffer>
    <experiments>3</experiments>
</comment>
<comment type="interaction">
    <interactant intactId="EBI-1055079">
        <id>O15160</id>
    </interactant>
    <interactant intactId="EBI-1054270">
        <id>Q9Y3D9</id>
        <label>MRPS23</label>
    </interactant>
    <organismsDiffer>false</organismsDiffer>
    <experiments>3</experiments>
</comment>
<comment type="interaction">
    <interactant intactId="EBI-1055079">
        <id>O15160</id>
    </interactant>
    <interactant intactId="EBI-1246371">
        <id>O96000</id>
        <label>NDUFB10</label>
    </interactant>
    <organismsDiffer>false</organismsDiffer>
    <experiments>3</experiments>
</comment>
<comment type="interaction">
    <interactant intactId="EBI-1055079">
        <id>O15160</id>
    </interactant>
    <interactant intactId="EBI-11980721">
        <id>P46934-3</id>
        <label>NEDD4</label>
    </interactant>
    <organismsDiffer>false</organismsDiffer>
    <experiments>3</experiments>
</comment>
<comment type="interaction">
    <interactant intactId="EBI-1055079">
        <id>O15160</id>
    </interactant>
    <interactant intactId="EBI-740897">
        <id>Q9GZT8</id>
        <label>NIF3L1</label>
    </interactant>
    <organismsDiffer>false</organismsDiffer>
    <experiments>3</experiments>
</comment>
<comment type="interaction">
    <interactant intactId="EBI-1055079">
        <id>O15160</id>
    </interactant>
    <interactant intactId="EBI-741141">
        <id>P15531</id>
        <label>NME1</label>
    </interactant>
    <organismsDiffer>false</organismsDiffer>
    <experiments>11</experiments>
</comment>
<comment type="interaction">
    <interactant intactId="EBI-1055079">
        <id>O15160</id>
    </interactant>
    <interactant intactId="EBI-744871">
        <id>O00746</id>
        <label>NME4</label>
    </interactant>
    <organismsDiffer>false</organismsDiffer>
    <experiments>5</experiments>
</comment>
<comment type="interaction">
    <interactant intactId="EBI-1055079">
        <id>O15160</id>
    </interactant>
    <interactant intactId="EBI-10232538">
        <id>Q8WWB5</id>
        <label>PIH1D2</label>
    </interactant>
    <organismsDiffer>false</organismsDiffer>
    <experiments>3</experiments>
</comment>
<comment type="interaction">
    <interactant intactId="EBI-1055079">
        <id>O15160</id>
    </interactant>
    <interactant intactId="EBI-10276663">
        <id>Q8WUT1</id>
        <label>POLDIP3</label>
    </interactant>
    <organismsDiffer>false</organismsDiffer>
    <experiments>3</experiments>
</comment>
<comment type="interaction">
    <interactant intactId="EBI-1055079">
        <id>O15160</id>
    </interactant>
    <interactant intactId="EBI-359498">
        <id>P0DPB6</id>
        <label>POLR1D</label>
    </interactant>
    <organismsDiffer>false</organismsDiffer>
    <experiments>19</experiments>
</comment>
<comment type="interaction">
    <interactant intactId="EBI-1055079">
        <id>O15160</id>
    </interactant>
    <interactant intactId="EBI-347928">
        <id>P62487</id>
        <label>POLR2G</label>
    </interactant>
    <organismsDiffer>false</organismsDiffer>
    <experiments>3</experiments>
</comment>
<comment type="interaction">
    <interactant intactId="EBI-1055079">
        <id>O15160</id>
    </interactant>
    <interactant intactId="EBI-394753">
        <id>P52435</id>
        <label>POLR2J</label>
    </interactant>
    <organismsDiffer>false</organismsDiffer>
    <experiments>12</experiments>
</comment>
<comment type="interaction">
    <interactant intactId="EBI-1055079">
        <id>O15160</id>
    </interactant>
    <interactant intactId="EBI-12818681">
        <id>Q9H1A7</id>
        <label>POLR2J3</label>
    </interactant>
    <organismsDiffer>false</organismsDiffer>
    <experiments>3</experiments>
</comment>
<comment type="interaction">
    <interactant intactId="EBI-1055079">
        <id>O15160</id>
    </interactant>
    <interactant intactId="EBI-2561661">
        <id>Q969Q6</id>
        <label>PPP2R3C</label>
    </interactant>
    <organismsDiffer>false</organismsDiffer>
    <experiments>5</experiments>
</comment>
<comment type="interaction">
    <interactant intactId="EBI-1055079">
        <id>O15160</id>
    </interactant>
    <interactant intactId="EBI-359352">
        <id>P25786</id>
        <label>PSMA1</label>
    </interactant>
    <organismsDiffer>false</organismsDiffer>
    <experiments>3</experiments>
</comment>
<comment type="interaction">
    <interactant intactId="EBI-1055079">
        <id>O15160</id>
    </interactant>
    <interactant intactId="EBI-473821">
        <id>Q5RL73</id>
        <label>RBM48</label>
    </interactant>
    <organismsDiffer>false</organismsDiffer>
    <experiments>3</experiments>
</comment>
<comment type="interaction">
    <interactant intactId="EBI-1055079">
        <id>O15160</id>
    </interactant>
    <interactant intactId="EBI-10182375">
        <id>Q9UFD9</id>
        <label>RIMBP3</label>
    </interactant>
    <organismsDiffer>false</organismsDiffer>
    <experiments>6</experiments>
</comment>
<comment type="interaction">
    <interactant intactId="EBI-1055079">
        <id>O15160</id>
    </interactant>
    <interactant intactId="EBI-748350">
        <id>Q9UHP6</id>
        <label>RSPH14</label>
    </interactant>
    <organismsDiffer>false</organismsDiffer>
    <experiments>3</experiments>
</comment>
<comment type="interaction">
    <interactant intactId="EBI-1055079">
        <id>O15160</id>
    </interactant>
    <interactant intactId="EBI-6257312">
        <id>Q9BVN2</id>
        <label>RUSC1</label>
    </interactant>
    <organismsDiffer>false</organismsDiffer>
    <experiments>3</experiments>
</comment>
<comment type="interaction">
    <interactant intactId="EBI-1055079">
        <id>O15160</id>
    </interactant>
    <interactant intactId="EBI-3957636">
        <id>Q8IYX7</id>
        <label>SAXO1</label>
    </interactant>
    <organismsDiffer>false</organismsDiffer>
    <experiments>3</experiments>
</comment>
<comment type="interaction">
    <interactant intactId="EBI-1055079">
        <id>O15160</id>
    </interactant>
    <interactant intactId="EBI-395421">
        <id>Q16637</id>
        <label>SMN2</label>
    </interactant>
    <organismsDiffer>false</organismsDiffer>
    <experiments>6</experiments>
</comment>
<comment type="interaction">
    <interactant intactId="EBI-1055079">
        <id>O15160</id>
    </interactant>
    <interactant intactId="EBI-741237">
        <id>O60504</id>
        <label>SORBS3</label>
    </interactant>
    <organismsDiffer>false</organismsDiffer>
    <experiments>3</experiments>
</comment>
<comment type="interaction">
    <interactant intactId="EBI-1055079">
        <id>O15160</id>
    </interactant>
    <interactant intactId="EBI-11995806">
        <id>Q9H0A9-2</id>
        <label>SPATC1L</label>
    </interactant>
    <organismsDiffer>false</organismsDiffer>
    <experiments>3</experiments>
</comment>
<comment type="interaction">
    <interactant intactId="EBI-1055079">
        <id>O15160</id>
    </interactant>
    <interactant intactId="EBI-18115728">
        <id>Q6ZNM6</id>
        <label>SPMIP10</label>
    </interactant>
    <organismsDiffer>false</organismsDiffer>
    <experiments>3</experiments>
</comment>
<comment type="interaction">
    <interactant intactId="EBI-1055079">
        <id>O15160</id>
    </interactant>
    <interactant intactId="EBI-12020542">
        <id>Q96LM5</id>
        <label>SPMIP2</label>
    </interactant>
    <organismsDiffer>false</organismsDiffer>
    <experiments>3</experiments>
</comment>
<comment type="interaction">
    <interactant intactId="EBI-1055079">
        <id>O15160</id>
    </interactant>
    <interactant intactId="EBI-3866665">
        <id>O43609</id>
        <label>SPRY1</label>
    </interactant>
    <organismsDiffer>false</organismsDiffer>
    <experiments>3</experiments>
</comment>
<comment type="interaction">
    <interactant intactId="EBI-1055079">
        <id>O15160</id>
    </interactant>
    <interactant intactId="EBI-725557">
        <id>Q9NZ72</id>
        <label>STMN3</label>
    </interactant>
    <organismsDiffer>false</organismsDiffer>
    <experiments>3</experiments>
</comment>
<comment type="interaction">
    <interactant intactId="EBI-1055079">
        <id>O15160</id>
    </interactant>
    <interactant intactId="EBI-10172380">
        <id>Q5VWN6-2</id>
        <label>TASOR2</label>
    </interactant>
    <organismsDiffer>false</organismsDiffer>
    <experiments>3</experiments>
</comment>
<comment type="interaction">
    <interactant intactId="EBI-1055079">
        <id>O15160</id>
    </interactant>
    <interactant intactId="EBI-529518">
        <id>Q86VP1</id>
        <label>TAX1BP1</label>
    </interactant>
    <organismsDiffer>false</organismsDiffer>
    <experiments>3</experiments>
</comment>
<comment type="interaction">
    <interactant intactId="EBI-1055079">
        <id>O15160</id>
    </interactant>
    <interactant intactId="EBI-533224">
        <id>P15884</id>
        <label>TCF4</label>
    </interactant>
    <organismsDiffer>false</organismsDiffer>
    <experiments>3</experiments>
</comment>
<comment type="interaction">
    <interactant intactId="EBI-1055079">
        <id>O15160</id>
    </interactant>
    <interactant intactId="EBI-1105213">
        <id>Q9UBB9</id>
        <label>TFIP11</label>
    </interactant>
    <organismsDiffer>false</organismsDiffer>
    <experiments>5</experiments>
</comment>
<comment type="interaction">
    <interactant intactId="EBI-1055079">
        <id>O15160</id>
    </interactant>
    <interactant intactId="EBI-11741437">
        <id>Q08117-2</id>
        <label>TLE5</label>
    </interactant>
    <organismsDiffer>false</organismsDiffer>
    <experiments>3</experiments>
</comment>
<comment type="interaction">
    <interactant intactId="EBI-1055079">
        <id>O15160</id>
    </interactant>
    <interactant intactId="EBI-12155101">
        <id>Q9BTD3</id>
        <label>TMEM121</label>
    </interactant>
    <organismsDiffer>false</organismsDiffer>
    <experiments>3</experiments>
</comment>
<comment type="interaction">
    <interactant intactId="EBI-1055079">
        <id>O15160</id>
    </interactant>
    <interactant intactId="EBI-2505861">
        <id>Q13829</id>
        <label>TNFAIP1</label>
    </interactant>
    <organismsDiffer>false</organismsDiffer>
    <experiments>9</experiments>
</comment>
<comment type="interaction">
    <interactant intactId="EBI-1055079">
        <id>O15160</id>
    </interactant>
    <interactant intactId="EBI-746692">
        <id>P19237</id>
        <label>TNNI1</label>
    </interactant>
    <organismsDiffer>false</organismsDiffer>
    <experiments>3</experiments>
</comment>
<comment type="interaction">
    <interactant intactId="EBI-1055079">
        <id>O15160</id>
    </interactant>
    <interactant intactId="EBI-1756205">
        <id>Q9BWF2</id>
        <label>TRAIP</label>
    </interactant>
    <organismsDiffer>false</organismsDiffer>
    <experiments>3</experiments>
</comment>
<comment type="interaction">
    <interactant intactId="EBI-1055079">
        <id>O15160</id>
    </interactant>
    <interactant intactId="EBI-2820256">
        <id>Q14142</id>
        <label>TRIM14</label>
    </interactant>
    <organismsDiffer>false</organismsDiffer>
    <experiments>3</experiments>
</comment>
<comment type="interaction">
    <interactant intactId="EBI-1055079">
        <id>O15160</id>
    </interactant>
    <interactant intactId="EBI-719493">
        <id>P14373</id>
        <label>TRIM27</label>
    </interactant>
    <organismsDiffer>false</organismsDiffer>
    <experiments>6</experiments>
</comment>
<comment type="interaction">
    <interactant intactId="EBI-1055079">
        <id>O15160</id>
    </interactant>
    <interactant intactId="EBI-739485">
        <id>Q9Y3Q8</id>
        <label>TSC22D4</label>
    </interactant>
    <organismsDiffer>false</organismsDiffer>
    <experiments>6</experiments>
</comment>
<comment type="interaction">
    <interactant intactId="EBI-1055079">
        <id>O15160</id>
    </interactant>
    <interactant intactId="EBI-12817837">
        <id>Q9H9P5-5</id>
        <label>UNKL</label>
    </interactant>
    <organismsDiffer>false</organismsDiffer>
    <experiments>3</experiments>
</comment>
<comment type="interaction">
    <interactant intactId="EBI-1055079">
        <id>O15160</id>
    </interactant>
    <interactant intactId="EBI-11975223">
        <id>Q70EL1-9</id>
        <label>USP54</label>
    </interactant>
    <organismsDiffer>false</organismsDiffer>
    <experiments>3</experiments>
</comment>
<comment type="interaction">
    <interactant intactId="EBI-1055079">
        <id>O15160</id>
    </interactant>
    <interactant intactId="EBI-295222">
        <id>P23025</id>
        <label>XPA</label>
    </interactant>
    <organismsDiffer>false</organismsDiffer>
    <experiments>3</experiments>
</comment>
<comment type="interaction">
    <interactant intactId="EBI-1055079">
        <id>O15160</id>
    </interactant>
    <interactant intactId="EBI-740037">
        <id>O96006</id>
        <label>ZBED1</label>
    </interactant>
    <organismsDiffer>false</organismsDiffer>
    <experiments>3</experiments>
</comment>
<comment type="interaction">
    <interactant intactId="EBI-1055079">
        <id>O15160</id>
    </interactant>
    <interactant intactId="EBI-12287587">
        <id>B2RXF5</id>
        <label>ZBTB42</label>
    </interactant>
    <organismsDiffer>false</organismsDiffer>
    <experiments>3</experiments>
</comment>
<comment type="interaction">
    <interactant intactId="EBI-1055079">
        <id>O15160</id>
    </interactant>
    <interactant intactId="EBI-14104088">
        <id>Q53FD0-2</id>
        <label>ZC2HC1C</label>
    </interactant>
    <organismsDiffer>false</organismsDiffer>
    <experiments>3</experiments>
</comment>
<comment type="interaction">
    <interactant intactId="EBI-1055079">
        <id>O15160</id>
    </interactant>
    <interactant intactId="EBI-12879708">
        <id>Q9NU63-3</id>
        <label>ZFP57</label>
    </interactant>
    <organismsDiffer>false</organismsDiffer>
    <experiments>3</experiments>
</comment>
<comment type="interaction">
    <interactant intactId="EBI-1055079">
        <id>O15160</id>
    </interactant>
    <interactant intactId="EBI-11962760">
        <id>Q9NZV7</id>
        <label>ZIM2</label>
    </interactant>
    <organismsDiffer>false</organismsDiffer>
    <experiments>5</experiments>
</comment>
<comment type="interaction">
    <interactant intactId="EBI-1055079">
        <id>O15160</id>
    </interactant>
    <interactant intactId="EBI-12895421">
        <id>Q8IVP9</id>
        <label>ZNF547</label>
    </interactant>
    <organismsDiffer>false</organismsDiffer>
    <experiments>3</experiments>
</comment>
<comment type="interaction">
    <interactant intactId="EBI-1055079">
        <id>O15160</id>
    </interactant>
    <interactant intactId="EBI-19137100">
        <id>Q86TJ5</id>
        <label>ZNF554</label>
    </interactant>
    <organismsDiffer>false</organismsDiffer>
    <experiments>3</experiments>
</comment>
<comment type="interaction">
    <interactant intactId="EBI-1055079">
        <id>O15160</id>
    </interactant>
    <interactant intactId="EBI-625509">
        <id>Q8N720</id>
        <label>ZNF655</label>
    </interactant>
    <organismsDiffer>false</organismsDiffer>
    <experiments>3</experiments>
</comment>
<comment type="interaction">
    <interactant intactId="EBI-1055079">
        <id>O15160</id>
    </interactant>
    <interactant intactId="EBI-4395732">
        <id>P0C7X2</id>
        <label>ZNF688</label>
    </interactant>
    <organismsDiffer>false</organismsDiffer>
    <experiments>3</experiments>
</comment>
<comment type="interaction">
    <interactant intactId="EBI-1055079">
        <id>O15160</id>
    </interactant>
    <interactant intactId="EBI-5667516">
        <id>Q9Y2P0</id>
        <label>ZNF835</label>
    </interactant>
    <organismsDiffer>false</organismsDiffer>
    <experiments>3</experiments>
</comment>
<comment type="interaction">
    <interactant intactId="EBI-1055079">
        <id>O15160</id>
    </interactant>
    <interactant intactId="EBI-527853">
        <id>Q9UGI0</id>
        <label>ZRANB1</label>
    </interactant>
    <organismsDiffer>false</organismsDiffer>
    <experiments>3</experiments>
</comment>
<comment type="subcellular location">
    <subcellularLocation>
        <location evidence="5 6">Nucleus</location>
    </subcellularLocation>
    <subcellularLocation>
        <location evidence="12">Nucleus</location>
        <location evidence="12">Nucleolus</location>
    </subcellularLocation>
    <subcellularLocation>
        <location evidence="6">Cytoplasm</location>
        <location evidence="6">Cytosol</location>
    </subcellularLocation>
</comment>
<comment type="alternative products">
    <event type="alternative splicing"/>
    <isoform>
        <id>O15160-1</id>
        <name>1</name>
        <sequence type="displayed"/>
    </isoform>
    <isoform>
        <id>O15160-2</id>
        <name>2</name>
        <sequence type="described" ref="VSP_005913"/>
    </isoform>
</comment>
<comment type="disease" evidence="4 5">
    <disease id="DI-02965">
        <name>Treacher Collins syndrome 3</name>
        <acronym>TCS3</acronym>
        <description>A form of Treacher Collins syndrome, a disorder of craniofacial development. Treacher Collins syndrome is characterized by a combination of bilateral downward slanting of the palpebral fissures, colobomas of the lower eyelids with a paucity of eyelashes medial to the defect, hypoplasia of the facial bones, cleft palate, malformation of the external ears, atresia of the external auditory canals, and bilateral conductive hearing loss.</description>
        <dbReference type="MIM" id="248390"/>
    </disease>
    <text>The disease is caused by variants affecting the gene represented in this entry.</text>
</comment>
<comment type="disease" evidence="5">
    <disease id="DI-04497">
        <name>Leukodystrophy, hypomyelinating, 11</name>
        <acronym>HLD11</acronym>
        <description>An autosomal recessive neurologic disorder characterized by brain hypomyelination, delayed psychomotor development, intellectual disability, tremor and other neurologic symptoms. Some patients may additionally manifest non-neurologic features, particularly dental abnormalities and hypogonadotropic hypogonadism.</description>
        <dbReference type="MIM" id="616494"/>
    </disease>
    <text>The disease is caused by variants affecting the gene represented in this entry.</text>
</comment>
<comment type="similarity">
    <text evidence="16">Belongs to the archaeal Rpo3/eukaryotic RPB3 RNA polymerase subunit family.</text>
</comment>
<accession>O15160</accession>
<accession>O75395</accession>
<accession>Q5JTE3</accession>
<organism>
    <name type="scientific">Homo sapiens</name>
    <name type="common">Human</name>
    <dbReference type="NCBI Taxonomy" id="9606"/>
    <lineage>
        <taxon>Eukaryota</taxon>
        <taxon>Metazoa</taxon>
        <taxon>Chordata</taxon>
        <taxon>Craniata</taxon>
        <taxon>Vertebrata</taxon>
        <taxon>Euteleostomi</taxon>
        <taxon>Mammalia</taxon>
        <taxon>Eutheria</taxon>
        <taxon>Euarchontoglires</taxon>
        <taxon>Primates</taxon>
        <taxon>Haplorrhini</taxon>
        <taxon>Catarrhini</taxon>
        <taxon>Hominidae</taxon>
        <taxon>Homo</taxon>
    </lineage>
</organism>
<dbReference type="EMBL" id="AF008442">
    <property type="protein sequence ID" value="AAC14354.1"/>
    <property type="molecule type" value="mRNA"/>
</dbReference>
<dbReference type="EMBL" id="AF047441">
    <property type="protein sequence ID" value="AAC39892.1"/>
    <property type="molecule type" value="mRNA"/>
</dbReference>
<dbReference type="EMBL" id="AL355802">
    <property type="status" value="NOT_ANNOTATED_CDS"/>
    <property type="molecule type" value="Genomic_DNA"/>
</dbReference>
<dbReference type="EMBL" id="BC008863">
    <property type="protein sequence ID" value="AAH08863.1"/>
    <property type="molecule type" value="mRNA"/>
</dbReference>
<dbReference type="CCDS" id="CCDS4901.1">
    <molecule id="O15160-1"/>
</dbReference>
<dbReference type="RefSeq" id="NP_001305805.1">
    <molecule id="O15160-2"/>
    <property type="nucleotide sequence ID" value="NM_001318876.2"/>
</dbReference>
<dbReference type="RefSeq" id="NP_976035.1">
    <molecule id="O15160-1"/>
    <property type="nucleotide sequence ID" value="NM_203290.4"/>
</dbReference>
<dbReference type="PDB" id="7A6H">
    <property type="method" value="EM"/>
    <property type="resolution" value="3.30 A"/>
    <property type="chains" value="C=1-346"/>
</dbReference>
<dbReference type="PDB" id="7AE1">
    <property type="method" value="EM"/>
    <property type="resolution" value="2.80 A"/>
    <property type="chains" value="C=1-346"/>
</dbReference>
<dbReference type="PDB" id="7AE3">
    <property type="method" value="EM"/>
    <property type="resolution" value="3.10 A"/>
    <property type="chains" value="C=1-346"/>
</dbReference>
<dbReference type="PDB" id="7AEA">
    <property type="method" value="EM"/>
    <property type="resolution" value="3.40 A"/>
    <property type="chains" value="C=1-346"/>
</dbReference>
<dbReference type="PDB" id="7AST">
    <property type="method" value="EM"/>
    <property type="resolution" value="4.00 A"/>
    <property type="chains" value="H=1-346"/>
</dbReference>
<dbReference type="PDB" id="7D58">
    <property type="method" value="EM"/>
    <property type="resolution" value="2.90 A"/>
    <property type="chains" value="C=1-346"/>
</dbReference>
<dbReference type="PDB" id="7D59">
    <property type="method" value="EM"/>
    <property type="resolution" value="3.10 A"/>
    <property type="chains" value="C=1-346"/>
</dbReference>
<dbReference type="PDB" id="7DN3">
    <property type="method" value="EM"/>
    <property type="resolution" value="3.50 A"/>
    <property type="chains" value="C=1-346"/>
</dbReference>
<dbReference type="PDB" id="7DU2">
    <property type="method" value="EM"/>
    <property type="resolution" value="3.35 A"/>
    <property type="chains" value="C=1-346"/>
</dbReference>
<dbReference type="PDB" id="7FJI">
    <property type="method" value="EM"/>
    <property type="resolution" value="3.60 A"/>
    <property type="chains" value="C=1-346"/>
</dbReference>
<dbReference type="PDB" id="7FJJ">
    <property type="method" value="EM"/>
    <property type="resolution" value="3.60 A"/>
    <property type="chains" value="C=1-346"/>
</dbReference>
<dbReference type="PDB" id="7OB9">
    <property type="method" value="EM"/>
    <property type="resolution" value="2.70 A"/>
    <property type="chains" value="C=1-346"/>
</dbReference>
<dbReference type="PDB" id="7OBA">
    <property type="method" value="EM"/>
    <property type="resolution" value="3.10 A"/>
    <property type="chains" value="C=1-346"/>
</dbReference>
<dbReference type="PDB" id="7OBB">
    <property type="method" value="EM"/>
    <property type="resolution" value="3.30 A"/>
    <property type="chains" value="C=1-346"/>
</dbReference>
<dbReference type="PDB" id="7VBA">
    <property type="method" value="EM"/>
    <property type="resolution" value="2.89 A"/>
    <property type="chains" value="C=1-346"/>
</dbReference>
<dbReference type="PDB" id="7VBB">
    <property type="method" value="EM"/>
    <property type="resolution" value="2.81 A"/>
    <property type="chains" value="C=1-346"/>
</dbReference>
<dbReference type="PDB" id="7VBC">
    <property type="method" value="EM"/>
    <property type="resolution" value="3.01 A"/>
    <property type="chains" value="C=1-346"/>
</dbReference>
<dbReference type="PDB" id="8A43">
    <property type="method" value="EM"/>
    <property type="resolution" value="4.09 A"/>
    <property type="chains" value="C=1-346"/>
</dbReference>
<dbReference type="PDB" id="8ITY">
    <property type="method" value="EM"/>
    <property type="resolution" value="3.90 A"/>
    <property type="chains" value="C=1-346"/>
</dbReference>
<dbReference type="PDB" id="8IUE">
    <property type="method" value="EM"/>
    <property type="resolution" value="4.10 A"/>
    <property type="chains" value="C=1-346"/>
</dbReference>
<dbReference type="PDB" id="8IUH">
    <property type="method" value="EM"/>
    <property type="resolution" value="3.40 A"/>
    <property type="chains" value="C=1-346"/>
</dbReference>
<dbReference type="PDB" id="9FSO">
    <property type="method" value="EM"/>
    <property type="resolution" value="3.28 A"/>
    <property type="chains" value="K=1-346"/>
</dbReference>
<dbReference type="PDB" id="9FSP">
    <property type="method" value="EM"/>
    <property type="resolution" value="3.39 A"/>
    <property type="chains" value="K=1-346"/>
</dbReference>
<dbReference type="PDB" id="9FSQ">
    <property type="method" value="EM"/>
    <property type="resolution" value="3.51 A"/>
    <property type="chains" value="K=1-346"/>
</dbReference>
<dbReference type="PDB" id="9FSR">
    <property type="method" value="EM"/>
    <property type="resolution" value="3.76 A"/>
    <property type="chains" value="K=1-346"/>
</dbReference>
<dbReference type="PDB" id="9FSS">
    <property type="method" value="EM"/>
    <property type="resolution" value="4.14 A"/>
    <property type="chains" value="K=1-346"/>
</dbReference>
<dbReference type="PDBsum" id="7A6H"/>
<dbReference type="PDBsum" id="7AE1"/>
<dbReference type="PDBsum" id="7AE3"/>
<dbReference type="PDBsum" id="7AEA"/>
<dbReference type="PDBsum" id="7AST"/>
<dbReference type="PDBsum" id="7D58"/>
<dbReference type="PDBsum" id="7D59"/>
<dbReference type="PDBsum" id="7DN3"/>
<dbReference type="PDBsum" id="7DU2"/>
<dbReference type="PDBsum" id="7FJI"/>
<dbReference type="PDBsum" id="7FJJ"/>
<dbReference type="PDBsum" id="7OB9"/>
<dbReference type="PDBsum" id="7OBA"/>
<dbReference type="PDBsum" id="7OBB"/>
<dbReference type="PDBsum" id="7VBA"/>
<dbReference type="PDBsum" id="7VBB"/>
<dbReference type="PDBsum" id="7VBC"/>
<dbReference type="PDBsum" id="8A43"/>
<dbReference type="PDBsum" id="8ITY"/>
<dbReference type="PDBsum" id="8IUE"/>
<dbReference type="PDBsum" id="8IUH"/>
<dbReference type="PDBsum" id="9FSO"/>
<dbReference type="PDBsum" id="9FSP"/>
<dbReference type="PDBsum" id="9FSQ"/>
<dbReference type="PDBsum" id="9FSR"/>
<dbReference type="PDBsum" id="9FSS"/>
<dbReference type="EMDB" id="EMD-11673"/>
<dbReference type="EMDB" id="EMD-11736"/>
<dbReference type="EMDB" id="EMD-11738"/>
<dbReference type="EMDB" id="EMD-11742"/>
<dbReference type="EMDB" id="EMD-11904"/>
<dbReference type="EMDB" id="EMD-12795"/>
<dbReference type="EMDB" id="EMD-12796"/>
<dbReference type="EMDB" id="EMD-12797"/>
<dbReference type="EMDB" id="EMD-15135"/>
<dbReference type="EMDB" id="EMD-30577"/>
<dbReference type="EMDB" id="EMD-30578"/>
<dbReference type="EMDB" id="EMD-30779"/>
<dbReference type="EMDB" id="EMD-30865"/>
<dbReference type="EMDB" id="EMD-31621"/>
<dbReference type="EMDB" id="EMD-31622"/>
<dbReference type="EMDB" id="EMD-31876"/>
<dbReference type="EMDB" id="EMD-31877"/>
<dbReference type="EMDB" id="EMD-31878"/>
<dbReference type="EMDB" id="EMD-35712"/>
<dbReference type="EMDB" id="EMD-35719"/>
<dbReference type="EMDB" id="EMD-35722"/>
<dbReference type="EMDB" id="EMD-50730"/>
<dbReference type="EMDB" id="EMD-50731"/>
<dbReference type="EMDB" id="EMD-50732"/>
<dbReference type="EMDB" id="EMD-50733"/>
<dbReference type="EMDB" id="EMD-50734"/>
<dbReference type="SMR" id="O15160"/>
<dbReference type="BioGRID" id="114909">
    <property type="interactions" value="311"/>
</dbReference>
<dbReference type="ComplexPortal" id="CPX-2386">
    <property type="entry name" value="DNA-directed RNA polymerase I complex"/>
</dbReference>
<dbReference type="ComplexPortal" id="CPX-2393">
    <property type="entry name" value="DNA-directed RNA polymerase III complex, POLR3G variant"/>
</dbReference>
<dbReference type="ComplexPortal" id="CPX-7482">
    <property type="entry name" value="DNA-directed RNA polymerase III complex, POLR3GL variant"/>
</dbReference>
<dbReference type="CORUM" id="O15160"/>
<dbReference type="DIP" id="DIP-27587N"/>
<dbReference type="FunCoup" id="O15160">
    <property type="interactions" value="2326"/>
</dbReference>
<dbReference type="IntAct" id="O15160">
    <property type="interactions" value="207"/>
</dbReference>
<dbReference type="MINT" id="O15160"/>
<dbReference type="STRING" id="9606.ENSP00000496044"/>
<dbReference type="GlyGen" id="O15160">
    <property type="glycosylation" value="1 site, 1 O-linked glycan (1 site)"/>
</dbReference>
<dbReference type="iPTMnet" id="O15160"/>
<dbReference type="MetOSite" id="O15160"/>
<dbReference type="PhosphoSitePlus" id="O15160"/>
<dbReference type="SwissPalm" id="O15160"/>
<dbReference type="BioMuta" id="POLR1C"/>
<dbReference type="REPRODUCTION-2DPAGE" id="IPI00217386"/>
<dbReference type="jPOST" id="O15160"/>
<dbReference type="MassIVE" id="O15160"/>
<dbReference type="PaxDb" id="9606-ENSP00000361465"/>
<dbReference type="PeptideAtlas" id="O15160"/>
<dbReference type="ProteomicsDB" id="48481">
    <molecule id="O15160-1"/>
</dbReference>
<dbReference type="ProteomicsDB" id="48482">
    <molecule id="O15160-2"/>
</dbReference>
<dbReference type="Pumba" id="O15160"/>
<dbReference type="Antibodypedia" id="30448">
    <property type="antibodies" value="293 antibodies from 32 providers"/>
</dbReference>
<dbReference type="DNASU" id="9533"/>
<dbReference type="Ensembl" id="ENST00000304004.7">
    <molecule id="O15160-2"/>
    <property type="protein sequence ID" value="ENSP00000307212.3"/>
    <property type="gene ID" value="ENSG00000171453.20"/>
</dbReference>
<dbReference type="Ensembl" id="ENST00000607635.2">
    <molecule id="O15160-2"/>
    <property type="protein sequence ID" value="ENSP00000496683.1"/>
    <property type="gene ID" value="ENSG00000171453.20"/>
</dbReference>
<dbReference type="Ensembl" id="ENST00000642195.1">
    <molecule id="O15160-1"/>
    <property type="protein sequence ID" value="ENSP00000496044.1"/>
    <property type="gene ID" value="ENSG00000171453.20"/>
</dbReference>
<dbReference type="GeneID" id="9533"/>
<dbReference type="KEGG" id="hsa:9533"/>
<dbReference type="MANE-Select" id="ENST00000642195.1">
    <property type="protein sequence ID" value="ENSP00000496044.1"/>
    <property type="RefSeq nucleotide sequence ID" value="NM_203290.4"/>
    <property type="RefSeq protein sequence ID" value="NP_976035.1"/>
</dbReference>
<dbReference type="UCSC" id="uc003ovn.4">
    <molecule id="O15160-1"/>
    <property type="organism name" value="human"/>
</dbReference>
<dbReference type="AGR" id="HGNC:20194"/>
<dbReference type="CTD" id="9533"/>
<dbReference type="DisGeNET" id="9533"/>
<dbReference type="GeneCards" id="POLR1C"/>
<dbReference type="GeneReviews" id="POLR1C"/>
<dbReference type="HGNC" id="HGNC:20194">
    <property type="gene designation" value="POLR1C"/>
</dbReference>
<dbReference type="HPA" id="ENSG00000171453">
    <property type="expression patterns" value="Low tissue specificity"/>
</dbReference>
<dbReference type="MalaCards" id="POLR1C"/>
<dbReference type="MIM" id="248390">
    <property type="type" value="phenotype"/>
</dbReference>
<dbReference type="MIM" id="610060">
    <property type="type" value="gene"/>
</dbReference>
<dbReference type="MIM" id="616494">
    <property type="type" value="phenotype"/>
</dbReference>
<dbReference type="neXtProt" id="NX_O15160"/>
<dbReference type="OpenTargets" id="ENSG00000171453"/>
<dbReference type="Orphanet" id="88637">
    <property type="disease" value="Hypomyelination-hypogonadotropic hypogonadism-hypodontia syndrome"/>
</dbReference>
<dbReference type="Orphanet" id="861">
    <property type="disease" value="Treacher-Collins syndrome"/>
</dbReference>
<dbReference type="PharmGKB" id="PA134882004"/>
<dbReference type="VEuPathDB" id="HostDB:ENSG00000171453"/>
<dbReference type="eggNOG" id="KOG1521">
    <property type="taxonomic scope" value="Eukaryota"/>
</dbReference>
<dbReference type="GeneTree" id="ENSGT00950000183100"/>
<dbReference type="HOGENOM" id="CLU_038421_0_1_1"/>
<dbReference type="InParanoid" id="O15160"/>
<dbReference type="OMA" id="KKKCRAF"/>
<dbReference type="OrthoDB" id="270173at2759"/>
<dbReference type="PAN-GO" id="O15160">
    <property type="GO annotations" value="4 GO annotations based on evolutionary models"/>
</dbReference>
<dbReference type="PhylomeDB" id="O15160"/>
<dbReference type="TreeFam" id="TF103034"/>
<dbReference type="PathwayCommons" id="O15160"/>
<dbReference type="Reactome" id="R-HSA-1834949">
    <property type="pathway name" value="Cytosolic sensors of pathogen-associated DNA"/>
</dbReference>
<dbReference type="Reactome" id="R-HSA-427413">
    <property type="pathway name" value="NoRC negatively regulates rRNA expression"/>
</dbReference>
<dbReference type="Reactome" id="R-HSA-5250924">
    <property type="pathway name" value="B-WICH complex positively regulates rRNA expression"/>
</dbReference>
<dbReference type="Reactome" id="R-HSA-73762">
    <property type="pathway name" value="RNA Polymerase I Transcription Initiation"/>
</dbReference>
<dbReference type="Reactome" id="R-HSA-73772">
    <property type="pathway name" value="RNA Polymerase I Promoter Escape"/>
</dbReference>
<dbReference type="Reactome" id="R-HSA-73780">
    <property type="pathway name" value="RNA Polymerase III Chain Elongation"/>
</dbReference>
<dbReference type="Reactome" id="R-HSA-73863">
    <property type="pathway name" value="RNA Polymerase I Transcription Termination"/>
</dbReference>
<dbReference type="Reactome" id="R-HSA-73980">
    <property type="pathway name" value="RNA Polymerase III Transcription Termination"/>
</dbReference>
<dbReference type="Reactome" id="R-HSA-749476">
    <property type="pathway name" value="RNA Polymerase III Abortive And Retractive Initiation"/>
</dbReference>
<dbReference type="Reactome" id="R-HSA-76061">
    <property type="pathway name" value="RNA Polymerase III Transcription Initiation From Type 1 Promoter"/>
</dbReference>
<dbReference type="Reactome" id="R-HSA-76066">
    <property type="pathway name" value="RNA Polymerase III Transcription Initiation From Type 2 Promoter"/>
</dbReference>
<dbReference type="Reactome" id="R-HSA-76071">
    <property type="pathway name" value="RNA Polymerase III Transcription Initiation From Type 3 Promoter"/>
</dbReference>
<dbReference type="SignaLink" id="O15160"/>
<dbReference type="SIGNOR" id="O15160"/>
<dbReference type="BioGRID-ORCS" id="9533">
    <property type="hits" value="824 hits in 1164 CRISPR screens"/>
</dbReference>
<dbReference type="CD-CODE" id="91857CE7">
    <property type="entry name" value="Nucleolus"/>
</dbReference>
<dbReference type="ChiTaRS" id="POLR1C">
    <property type="organism name" value="human"/>
</dbReference>
<dbReference type="GeneWiki" id="POLR1C"/>
<dbReference type="GenomeRNAi" id="9533"/>
<dbReference type="Pharos" id="O15160">
    <property type="development level" value="Tbio"/>
</dbReference>
<dbReference type="PRO" id="PR:O15160"/>
<dbReference type="Proteomes" id="UP000005640">
    <property type="component" value="Chromosome 6"/>
</dbReference>
<dbReference type="RNAct" id="O15160">
    <property type="molecule type" value="protein"/>
</dbReference>
<dbReference type="Bgee" id="ENSG00000171453">
    <property type="expression patterns" value="Expressed in secondary oocyte and 198 other cell types or tissues"/>
</dbReference>
<dbReference type="ExpressionAtlas" id="O15160">
    <property type="expression patterns" value="baseline and differential"/>
</dbReference>
<dbReference type="GO" id="GO:0005737">
    <property type="term" value="C:cytoplasm"/>
    <property type="evidence" value="ECO:0000314"/>
    <property type="project" value="UniProtKB"/>
</dbReference>
<dbReference type="GO" id="GO:0005829">
    <property type="term" value="C:cytosol"/>
    <property type="evidence" value="ECO:0000304"/>
    <property type="project" value="Reactome"/>
</dbReference>
<dbReference type="GO" id="GO:0001650">
    <property type="term" value="C:fibrillar center"/>
    <property type="evidence" value="ECO:0000314"/>
    <property type="project" value="HPA"/>
</dbReference>
<dbReference type="GO" id="GO:0005654">
    <property type="term" value="C:nucleoplasm"/>
    <property type="evidence" value="ECO:0000314"/>
    <property type="project" value="HPA"/>
</dbReference>
<dbReference type="GO" id="GO:0005634">
    <property type="term" value="C:nucleus"/>
    <property type="evidence" value="ECO:0000314"/>
    <property type="project" value="UniProtKB"/>
</dbReference>
<dbReference type="GO" id="GO:0005736">
    <property type="term" value="C:RNA polymerase I complex"/>
    <property type="evidence" value="ECO:0000314"/>
    <property type="project" value="UniProtKB"/>
</dbReference>
<dbReference type="GO" id="GO:0005666">
    <property type="term" value="C:RNA polymerase III complex"/>
    <property type="evidence" value="ECO:0000314"/>
    <property type="project" value="UniProtKB"/>
</dbReference>
<dbReference type="GO" id="GO:0003677">
    <property type="term" value="F:DNA binding"/>
    <property type="evidence" value="ECO:0007669"/>
    <property type="project" value="InterPro"/>
</dbReference>
<dbReference type="GO" id="GO:0003899">
    <property type="term" value="F:DNA-directed RNA polymerase activity"/>
    <property type="evidence" value="ECO:0000304"/>
    <property type="project" value="ProtInc"/>
</dbReference>
<dbReference type="GO" id="GO:0046983">
    <property type="term" value="F:protein dimerization activity"/>
    <property type="evidence" value="ECO:0007669"/>
    <property type="project" value="InterPro"/>
</dbReference>
<dbReference type="GO" id="GO:0006360">
    <property type="term" value="P:transcription by RNA polymerase I"/>
    <property type="evidence" value="ECO:0000304"/>
    <property type="project" value="ProtInc"/>
</dbReference>
<dbReference type="CDD" id="cd07032">
    <property type="entry name" value="RNAP_I_II_AC40"/>
    <property type="match status" value="1"/>
</dbReference>
<dbReference type="FunFam" id="2.170.120.12:FF:000003">
    <property type="entry name" value="Dna-directed rna polymerases i and iii subunit"/>
    <property type="match status" value="1"/>
</dbReference>
<dbReference type="FunFam" id="3.30.1360.10:FF:000005">
    <property type="entry name" value="Dna-directed rna polymerases i and iii subunit"/>
    <property type="match status" value="1"/>
</dbReference>
<dbReference type="FunFam" id="3.30.1360.10:FF:000009">
    <property type="entry name" value="RNA polymerase I and III subunit C"/>
    <property type="match status" value="1"/>
</dbReference>
<dbReference type="Gene3D" id="2.170.120.12">
    <property type="entry name" value="DNA-directed RNA polymerase, insert domain"/>
    <property type="match status" value="1"/>
</dbReference>
<dbReference type="Gene3D" id="3.30.1360.10">
    <property type="entry name" value="RNA polymerase, RBP11-like subunit"/>
    <property type="match status" value="1"/>
</dbReference>
<dbReference type="HAMAP" id="MF_00320">
    <property type="entry name" value="RNApol_arch_Rpo3"/>
    <property type="match status" value="1"/>
</dbReference>
<dbReference type="InterPro" id="IPR001514">
    <property type="entry name" value="DNA-dir_RNA_pol_30-40kDasu_CS"/>
</dbReference>
<dbReference type="InterPro" id="IPR011262">
    <property type="entry name" value="DNA-dir_RNA_pol_insert"/>
</dbReference>
<dbReference type="InterPro" id="IPR011263">
    <property type="entry name" value="DNA-dir_RNA_pol_RpoA/D/Rpb3"/>
</dbReference>
<dbReference type="InterPro" id="IPR036603">
    <property type="entry name" value="RBP11-like"/>
</dbReference>
<dbReference type="InterPro" id="IPR022842">
    <property type="entry name" value="RNAP_Rpo3/Rpb3/RPAC1"/>
</dbReference>
<dbReference type="InterPro" id="IPR033901">
    <property type="entry name" value="RNAPI/III_AC40"/>
</dbReference>
<dbReference type="InterPro" id="IPR036643">
    <property type="entry name" value="RNApol_insert_sf"/>
</dbReference>
<dbReference type="InterPro" id="IPR050518">
    <property type="entry name" value="Rpo3/RPB3_RNA_Pol_subunit"/>
</dbReference>
<dbReference type="PANTHER" id="PTHR11800">
    <property type="entry name" value="DNA-DIRECTED RNA POLYMERASE"/>
    <property type="match status" value="1"/>
</dbReference>
<dbReference type="PANTHER" id="PTHR11800:SF13">
    <property type="entry name" value="DNA-DIRECTED RNA POLYMERASES I AND III SUBUNIT RPAC1"/>
    <property type="match status" value="1"/>
</dbReference>
<dbReference type="Pfam" id="PF01000">
    <property type="entry name" value="RNA_pol_A_bac"/>
    <property type="match status" value="1"/>
</dbReference>
<dbReference type="Pfam" id="PF01193">
    <property type="entry name" value="RNA_pol_L"/>
    <property type="match status" value="1"/>
</dbReference>
<dbReference type="SMART" id="SM00662">
    <property type="entry name" value="RPOLD"/>
    <property type="match status" value="1"/>
</dbReference>
<dbReference type="SUPFAM" id="SSF56553">
    <property type="entry name" value="Insert subdomain of RNA polymerase alpha subunit"/>
    <property type="match status" value="1"/>
</dbReference>
<dbReference type="SUPFAM" id="SSF55257">
    <property type="entry name" value="RBP11-like subunits of RNA polymerase"/>
    <property type="match status" value="1"/>
</dbReference>
<dbReference type="PROSITE" id="PS00446">
    <property type="entry name" value="RNA_POL_D_30KD"/>
    <property type="match status" value="1"/>
</dbReference>
<protein>
    <recommendedName>
        <fullName>DNA-directed RNA polymerases I and III subunit RPAC1</fullName>
        <shortName>DNA-directed RNA polymerase I subunit C</shortName>
        <shortName>RNA polymerases I and III subunit AC1</shortName>
    </recommendedName>
    <alternativeName>
        <fullName>AC40</fullName>
    </alternativeName>
    <alternativeName>
        <fullName>DNA-directed RNA polymerases I and III 40 kDa polypeptide</fullName>
        <shortName>RPA40</shortName>
    </alternativeName>
    <alternativeName>
        <fullName>RPA39</fullName>
    </alternativeName>
    <alternativeName>
        <fullName>RPC40</fullName>
    </alternativeName>
</protein>
<name>RPAC1_HUMAN</name>
<reference key="1">
    <citation type="journal article" date="1998" name="Biochim. Biophys. Acta">
        <title>Cloning and characterization of the human RNA polymerase I subunit hRPA40.</title>
        <authorList>
            <person name="Dammann R."/>
            <person name="Pfeifer G.P."/>
        </authorList>
    </citation>
    <scope>NUCLEOTIDE SEQUENCE [MRNA] (ISOFORM 1)</scope>
</reference>
<reference key="2">
    <citation type="journal article" date="1998" name="Proc. Natl. Acad. Sci. U.S.A.">
        <title>Identification of genes expressed in human CD34(+) hematopoietic stem/progenitor cells by expressed sequence tags and efficient full-length cDNA cloning.</title>
        <authorList>
            <person name="Mao M."/>
            <person name="Fu G."/>
            <person name="Wu J.-S."/>
            <person name="Zhang Q.-H."/>
            <person name="Zhou J."/>
            <person name="Kan L.-X."/>
            <person name="Huang Q.-H."/>
            <person name="He K.-L."/>
            <person name="Gu B.-W."/>
            <person name="Han Z.-G."/>
            <person name="Shen Y."/>
            <person name="Gu J."/>
            <person name="Yu Y.-P."/>
            <person name="Xu S.-H."/>
            <person name="Wang Y.-X."/>
            <person name="Chen S.-J."/>
            <person name="Chen Z."/>
        </authorList>
    </citation>
    <scope>NUCLEOTIDE SEQUENCE [LARGE SCALE MRNA] (ISOFORM 2)</scope>
    <source>
        <tissue>Umbilical cord blood</tissue>
    </source>
</reference>
<reference key="3">
    <citation type="journal article" date="2003" name="Nature">
        <title>The DNA sequence and analysis of human chromosome 6.</title>
        <authorList>
            <person name="Mungall A.J."/>
            <person name="Palmer S.A."/>
            <person name="Sims S.K."/>
            <person name="Edwards C.A."/>
            <person name="Ashurst J.L."/>
            <person name="Wilming L."/>
            <person name="Jones M.C."/>
            <person name="Horton R."/>
            <person name="Hunt S.E."/>
            <person name="Scott C.E."/>
            <person name="Gilbert J.G.R."/>
            <person name="Clamp M.E."/>
            <person name="Bethel G."/>
            <person name="Milne S."/>
            <person name="Ainscough R."/>
            <person name="Almeida J.P."/>
            <person name="Ambrose K.D."/>
            <person name="Andrews T.D."/>
            <person name="Ashwell R.I.S."/>
            <person name="Babbage A.K."/>
            <person name="Bagguley C.L."/>
            <person name="Bailey J."/>
            <person name="Banerjee R."/>
            <person name="Barker D.J."/>
            <person name="Barlow K.F."/>
            <person name="Bates K."/>
            <person name="Beare D.M."/>
            <person name="Beasley H."/>
            <person name="Beasley O."/>
            <person name="Bird C.P."/>
            <person name="Blakey S.E."/>
            <person name="Bray-Allen S."/>
            <person name="Brook J."/>
            <person name="Brown A.J."/>
            <person name="Brown J.Y."/>
            <person name="Burford D.C."/>
            <person name="Burrill W."/>
            <person name="Burton J."/>
            <person name="Carder C."/>
            <person name="Carter N.P."/>
            <person name="Chapman J.C."/>
            <person name="Clark S.Y."/>
            <person name="Clark G."/>
            <person name="Clee C.M."/>
            <person name="Clegg S."/>
            <person name="Cobley V."/>
            <person name="Collier R.E."/>
            <person name="Collins J.E."/>
            <person name="Colman L.K."/>
            <person name="Corby N.R."/>
            <person name="Coville G.J."/>
            <person name="Culley K.M."/>
            <person name="Dhami P."/>
            <person name="Davies J."/>
            <person name="Dunn M."/>
            <person name="Earthrowl M.E."/>
            <person name="Ellington A.E."/>
            <person name="Evans K.A."/>
            <person name="Faulkner L."/>
            <person name="Francis M.D."/>
            <person name="Frankish A."/>
            <person name="Frankland J."/>
            <person name="French L."/>
            <person name="Garner P."/>
            <person name="Garnett J."/>
            <person name="Ghori M.J."/>
            <person name="Gilby L.M."/>
            <person name="Gillson C.J."/>
            <person name="Glithero R.J."/>
            <person name="Grafham D.V."/>
            <person name="Grant M."/>
            <person name="Gribble S."/>
            <person name="Griffiths C."/>
            <person name="Griffiths M.N.D."/>
            <person name="Hall R."/>
            <person name="Halls K.S."/>
            <person name="Hammond S."/>
            <person name="Harley J.L."/>
            <person name="Hart E.A."/>
            <person name="Heath P.D."/>
            <person name="Heathcott R."/>
            <person name="Holmes S.J."/>
            <person name="Howden P.J."/>
            <person name="Howe K.L."/>
            <person name="Howell G.R."/>
            <person name="Huckle E."/>
            <person name="Humphray S.J."/>
            <person name="Humphries M.D."/>
            <person name="Hunt A.R."/>
            <person name="Johnson C.M."/>
            <person name="Joy A.A."/>
            <person name="Kay M."/>
            <person name="Keenan S.J."/>
            <person name="Kimberley A.M."/>
            <person name="King A."/>
            <person name="Laird G.K."/>
            <person name="Langford C."/>
            <person name="Lawlor S."/>
            <person name="Leongamornlert D.A."/>
            <person name="Leversha M."/>
            <person name="Lloyd C.R."/>
            <person name="Lloyd D.M."/>
            <person name="Loveland J.E."/>
            <person name="Lovell J."/>
            <person name="Martin S."/>
            <person name="Mashreghi-Mohammadi M."/>
            <person name="Maslen G.L."/>
            <person name="Matthews L."/>
            <person name="McCann O.T."/>
            <person name="McLaren S.J."/>
            <person name="McLay K."/>
            <person name="McMurray A."/>
            <person name="Moore M.J.F."/>
            <person name="Mullikin J.C."/>
            <person name="Niblett D."/>
            <person name="Nickerson T."/>
            <person name="Novik K.L."/>
            <person name="Oliver K."/>
            <person name="Overton-Larty E.K."/>
            <person name="Parker A."/>
            <person name="Patel R."/>
            <person name="Pearce A.V."/>
            <person name="Peck A.I."/>
            <person name="Phillimore B.J.C.T."/>
            <person name="Phillips S."/>
            <person name="Plumb R.W."/>
            <person name="Porter K.M."/>
            <person name="Ramsey Y."/>
            <person name="Ranby S.A."/>
            <person name="Rice C.M."/>
            <person name="Ross M.T."/>
            <person name="Searle S.M."/>
            <person name="Sehra H.K."/>
            <person name="Sheridan E."/>
            <person name="Skuce C.D."/>
            <person name="Smith S."/>
            <person name="Smith M."/>
            <person name="Spraggon L."/>
            <person name="Squares S.L."/>
            <person name="Steward C.A."/>
            <person name="Sycamore N."/>
            <person name="Tamlyn-Hall G."/>
            <person name="Tester J."/>
            <person name="Theaker A.J."/>
            <person name="Thomas D.W."/>
            <person name="Thorpe A."/>
            <person name="Tracey A."/>
            <person name="Tromans A."/>
            <person name="Tubby B."/>
            <person name="Wall M."/>
            <person name="Wallis J.M."/>
            <person name="West A.P."/>
            <person name="White S.S."/>
            <person name="Whitehead S.L."/>
            <person name="Whittaker H."/>
            <person name="Wild A."/>
            <person name="Willey D.J."/>
            <person name="Wilmer T.E."/>
            <person name="Wood J.M."/>
            <person name="Wray P.W."/>
            <person name="Wyatt J.C."/>
            <person name="Young L."/>
            <person name="Younger R.M."/>
            <person name="Bentley D.R."/>
            <person name="Coulson A."/>
            <person name="Durbin R.M."/>
            <person name="Hubbard T."/>
            <person name="Sulston J.E."/>
            <person name="Dunham I."/>
            <person name="Rogers J."/>
            <person name="Beck S."/>
        </authorList>
    </citation>
    <scope>NUCLEOTIDE SEQUENCE [LARGE SCALE GENOMIC DNA]</scope>
</reference>
<reference key="4">
    <citation type="journal article" date="2004" name="Genome Res.">
        <title>The status, quality, and expansion of the NIH full-length cDNA project: the Mammalian Gene Collection (MGC).</title>
        <authorList>
            <consortium name="The MGC Project Team"/>
        </authorList>
    </citation>
    <scope>NUCLEOTIDE SEQUENCE [LARGE SCALE MRNA] (ISOFORM 1)</scope>
    <source>
        <tissue>Brain</tissue>
    </source>
</reference>
<reference key="5">
    <citation type="submission" date="2008-12" db="UniProtKB">
        <authorList>
            <person name="Bienvenut W.V."/>
            <person name="Lilla S."/>
            <person name="von Kriegsheim A."/>
            <person name="Lempens A."/>
            <person name="Kolch W."/>
        </authorList>
    </citation>
    <scope>PROTEIN SEQUENCE OF 2-11; 14-22; 79-91; 110-120; 155-167 AND 225-255</scope>
    <scope>CLEAVAGE OF INITIATOR METHIONINE</scope>
    <scope>ACETYLATION AT ALA-2</scope>
    <scope>IDENTIFICATION BY MASS SPECTROMETRY</scope>
    <source>
        <tissue>Ovarian carcinoma</tissue>
    </source>
</reference>
<reference key="6">
    <citation type="journal article" date="2002" name="Mol. Cell. Biol.">
        <title>Characterization of human RNA polymerase III identifies orthologues for Saccharomyces cerevisiae RNA polymerase III subunits.</title>
        <authorList>
            <person name="Hu P."/>
            <person name="Wu S."/>
            <person name="Sun Y."/>
            <person name="Yuan C.-C."/>
            <person name="Kobayashi R."/>
            <person name="Myers M.P."/>
            <person name="Hernandez N."/>
        </authorList>
    </citation>
    <scope>IDENTIFICATION IN THE RNA POL III COMPLEX</scope>
    <scope>IDENTIFICATION BY MASS SPECTROMETRY</scope>
</reference>
<reference key="7">
    <citation type="journal article" date="2005" name="Nat. Biotechnol.">
        <title>Immunoaffinity profiling of tyrosine phosphorylation in cancer cells.</title>
        <authorList>
            <person name="Rush J."/>
            <person name="Moritz A."/>
            <person name="Lee K.A."/>
            <person name="Guo A."/>
            <person name="Goss V.L."/>
            <person name="Spek E.J."/>
            <person name="Zhang H."/>
            <person name="Zha X.-M."/>
            <person name="Polakiewicz R.D."/>
            <person name="Comb M.J."/>
        </authorList>
    </citation>
    <scope>IDENTIFICATION BY MASS SPECTROMETRY [LARGE SCALE ANALYSIS]</scope>
</reference>
<reference key="8">
    <citation type="journal article" date="2009" name="Anal. Chem.">
        <title>Lys-N and trypsin cover complementary parts of the phosphoproteome in a refined SCX-based approach.</title>
        <authorList>
            <person name="Gauci S."/>
            <person name="Helbig A.O."/>
            <person name="Slijper M."/>
            <person name="Krijgsveld J."/>
            <person name="Heck A.J."/>
            <person name="Mohammed S."/>
        </authorList>
    </citation>
    <scope>ACETYLATION [LARGE SCALE ANALYSIS] AT ALA-2</scope>
    <scope>CLEAVAGE OF INITIATOR METHIONINE [LARGE SCALE ANALYSIS]</scope>
    <scope>IDENTIFICATION BY MASS SPECTROMETRY [LARGE SCALE ANALYSIS]</scope>
</reference>
<reference key="9">
    <citation type="journal article" date="2010" name="Genome Res.">
        <title>Defining the RNA polymerase III transcriptome: Genome-wide localization of the RNA polymerase III transcription machinery in human cells.</title>
        <authorList>
            <person name="Canella D."/>
            <person name="Praz V."/>
            <person name="Reina J.H."/>
            <person name="Cousin P."/>
            <person name="Hernandez N."/>
        </authorList>
    </citation>
    <scope>FUNCTION OF POL III</scope>
</reference>
<reference key="10">
    <citation type="journal article" date="2011" name="BMC Syst. Biol.">
        <title>Initial characterization of the human central proteome.</title>
        <authorList>
            <person name="Burkard T.R."/>
            <person name="Planyavsky M."/>
            <person name="Kaupe I."/>
            <person name="Breitwieser F.P."/>
            <person name="Buerckstuemmer T."/>
            <person name="Bennett K.L."/>
            <person name="Superti-Furga G."/>
            <person name="Colinge J."/>
        </authorList>
    </citation>
    <scope>IDENTIFICATION BY MASS SPECTROMETRY [LARGE SCALE ANALYSIS]</scope>
</reference>
<reference key="11">
    <citation type="journal article" date="2012" name="Mol. Cell. Proteomics">
        <title>Comparative large-scale characterisation of plant vs. mammal proteins reveals similar and idiosyncratic N-alpha acetylation features.</title>
        <authorList>
            <person name="Bienvenut W.V."/>
            <person name="Sumpton D."/>
            <person name="Martinez A."/>
            <person name="Lilla S."/>
            <person name="Espagne C."/>
            <person name="Meinnel T."/>
            <person name="Giglione C."/>
        </authorList>
    </citation>
    <scope>ACETYLATION [LARGE SCALE ANALYSIS] AT ALA-2</scope>
    <scope>CLEAVAGE OF INITIATOR METHIONINE [LARGE SCALE ANALYSIS]</scope>
    <scope>IDENTIFICATION BY MASS SPECTROMETRY [LARGE SCALE ANALYSIS]</scope>
</reference>
<reference key="12">
    <citation type="journal article" date="2012" name="Proc. Natl. Acad. Sci. U.S.A.">
        <title>N-terminal acetylome analyses and functional insights of the N-terminal acetyltransferase NatB.</title>
        <authorList>
            <person name="Van Damme P."/>
            <person name="Lasa M."/>
            <person name="Polevoda B."/>
            <person name="Gazquez C."/>
            <person name="Elosegui-Artola A."/>
            <person name="Kim D.S."/>
            <person name="De Juan-Pardo E."/>
            <person name="Demeyer K."/>
            <person name="Hole K."/>
            <person name="Larrea E."/>
            <person name="Timmerman E."/>
            <person name="Prieto J."/>
            <person name="Arnesen T."/>
            <person name="Sherman F."/>
            <person name="Gevaert K."/>
            <person name="Aldabe R."/>
        </authorList>
    </citation>
    <scope>ACETYLATION [LARGE SCALE ANALYSIS] AT ALA-2</scope>
    <scope>CLEAVAGE OF INITIATOR METHIONINE [LARGE SCALE ANALYSIS]</scope>
    <scope>IDENTIFICATION BY MASS SPECTROMETRY [LARGE SCALE ANALYSIS]</scope>
</reference>
<reference key="13">
    <citation type="journal article" date="2013" name="J. Proteome Res.">
        <title>Toward a comprehensive characterization of a human cancer cell phosphoproteome.</title>
        <authorList>
            <person name="Zhou H."/>
            <person name="Di Palma S."/>
            <person name="Preisinger C."/>
            <person name="Peng M."/>
            <person name="Polat A.N."/>
            <person name="Heck A.J."/>
            <person name="Mohammed S."/>
        </authorList>
    </citation>
    <scope>PHOSPHORYLATION [LARGE SCALE ANALYSIS] AT SER-4</scope>
    <scope>IDENTIFICATION BY MASS SPECTROMETRY [LARGE SCALE ANALYSIS]</scope>
    <source>
        <tissue>Erythroleukemia</tissue>
    </source>
</reference>
<reference key="14">
    <citation type="journal article" date="2015" name="Nat. Commun.">
        <title>Recessive mutations in POLR1C cause a leukodystrophy by impairing biogenesis of RNA polymerase III.</title>
        <authorList>
            <person name="Thiffault I."/>
            <person name="Wolf N.I."/>
            <person name="Forget D."/>
            <person name="Guerrero K."/>
            <person name="Tran L.T."/>
            <person name="Choquet K."/>
            <person name="Lavallee-Adam M."/>
            <person name="Poitras C."/>
            <person name="Brais B."/>
            <person name="Yoon G."/>
            <person name="Sztriha L."/>
            <person name="Webster R.I."/>
            <person name="Timmann D."/>
            <person name="van de Warrenburg B.P."/>
            <person name="Seeger J."/>
            <person name="Zimmermann A."/>
            <person name="Mate A."/>
            <person name="Goizet C."/>
            <person name="Fung E."/>
            <person name="van der Knaap M.S."/>
            <person name="Fribourg S."/>
            <person name="Vanderver A."/>
            <person name="Simons C."/>
            <person name="Taft R.J."/>
            <person name="Yates J.R. III"/>
            <person name="Coulombe B."/>
            <person name="Bernard G."/>
        </authorList>
    </citation>
    <scope>SUBCELLULAR LOCATION</scope>
    <scope>SUBUNIT</scope>
    <scope>FUNCTION</scope>
    <scope>INVOLVEMENT IN HLD11</scope>
    <scope>VARIANTS HLD11 ILE-26; ILE-32; VAL-65; SER-74; ALA-94; HIS-109; ASP-132; ARG-146; GLN-191; THR-262; LYS-295 DEL AND LYS-324</scope>
    <scope>CHARACTERIZATION OF VARIANTS HLD11 ILE-32 AND SER-74</scope>
    <scope>CHARACTERIZATION OF VARIANT TCS3 GLN-279</scope>
</reference>
<reference key="15">
    <citation type="journal article" date="2020" name="Nat. Commun.">
        <title>Structure of human RNA polymerase III.</title>
        <authorList>
            <person name="Ramsay E.P."/>
            <person name="Abascal-Palacios G."/>
            <person name="Daiss J.L."/>
            <person name="King H."/>
            <person name="Gouge J."/>
            <person name="Pilsl M."/>
            <person name="Beuron F."/>
            <person name="Morris E."/>
            <person name="Gunkel P."/>
            <person name="Engel C."/>
            <person name="Vannini A."/>
        </authorList>
    </citation>
    <scope>STRUCTURE BY ELECTRON MICROSCOPY (4.00 ANGSTROMS)</scope>
    <scope>SUBUNIT</scope>
    <scope>SUBCELLULAR LOCATION</scope>
</reference>
<reference key="16">
    <citation type="journal article" date="2021" name="Cell Res.">
        <title>Structure of human RNA polymerase III elongation complex.</title>
        <authorList>
            <person name="Li L."/>
            <person name="Yu Z."/>
            <person name="Zhao D."/>
            <person name="Ren Y."/>
            <person name="Hou H."/>
            <person name="Xu Y."/>
        </authorList>
    </citation>
    <scope>STRUCTURE BY ELECTRON MICROSCOPY (3.35 ANGSTROMS)</scope>
    <scope>SUBUNIT</scope>
</reference>
<reference key="17">
    <citation type="journal article" date="2021" name="Nat. Commun.">
        <title>Structural insights into RNA polymerase III-mediated transcription termination through trapping poly-deoxythymidine.</title>
        <authorList>
            <person name="Hou H."/>
            <person name="Li Y."/>
            <person name="Wang M."/>
            <person name="Liu A."/>
            <person name="Yu Z."/>
            <person name="Chen K."/>
            <person name="Zhao D."/>
            <person name="Xu Y."/>
        </authorList>
    </citation>
    <scope>STRUCTURE BY ELECTRON MICROSCOPY (3.60 ANGSTROMS)</scope>
    <scope>SUBUNIT</scope>
</reference>
<reference key="18">
    <citation type="journal article" date="2021" name="Nat. Struct. Mol. Biol.">
        <title>Cryo-EM structures of human RNA polymerase III in its unbound and transcribing states.</title>
        <authorList>
            <person name="Girbig M."/>
            <person name="Misiaszek A.D."/>
            <person name="Vorlander M.K."/>
            <person name="Lafita A."/>
            <person name="Grotsch H."/>
            <person name="Baudin F."/>
            <person name="Bateman A."/>
            <person name="Muller C.W."/>
        </authorList>
    </citation>
    <scope>STRUCTURE BY ELECTRON MICROSCOPY (2.80 ANGSTROMS)</scope>
    <scope>SUBUNIT</scope>
</reference>
<reference key="19">
    <citation type="journal article" date="2021" name="Nat. Struct. Mol. Biol.">
        <title>Structural insights into transcriptional regulation of human RNA polymerase III.</title>
        <authorList>
            <person name="Wang Q."/>
            <person name="Li S."/>
            <person name="Wan F."/>
            <person name="Xu Y."/>
            <person name="Wu Z."/>
            <person name="Cao M."/>
            <person name="Lan P."/>
            <person name="Lei M."/>
            <person name="Wu J."/>
        </authorList>
    </citation>
    <scope>STRUCTURE BY ELECTRON MICROSCOPY (2.90 ANGSTROMS)</scope>
    <scope>SUBUNIT</scope>
</reference>
<reference key="20">
    <citation type="journal article" date="2021" name="Cell Discov.">
        <title>Structure of the human RNA polymerase I elongation complex.</title>
        <authorList>
            <person name="Zhao D."/>
            <person name="Liu W."/>
            <person name="Chen K."/>
            <person name="Wu Z."/>
            <person name="Yang H."/>
            <person name="Xu Y."/>
        </authorList>
    </citation>
    <scope>STRUCTURE BY ELECTRON MICROSCOPY (2.81 ANGSTROMS)</scope>
    <scope>FUNCTION OF POL I</scope>
    <scope>SUBUNIT</scope>
</reference>
<reference key="21">
    <citation type="journal article" date="2021" name="Nat. Struct. Mol. Biol.">
        <title>Cryo-EM structures of human RNA polymerase I.</title>
        <authorList>
            <person name="Misiaszek A.D."/>
            <person name="Girbig M."/>
            <person name="Grotsch H."/>
            <person name="Baudin F."/>
            <person name="Murciano B."/>
            <person name="Lafita A."/>
            <person name="Muller C.W."/>
        </authorList>
    </citation>
    <scope>STRUCTURE BY ELECTRON MICROSCOPY (2.70 ANGSTROMS)</scope>
    <scope>FUNCTION OF POL I</scope>
    <scope>SUBUNIT</scope>
    <scope>SUBCELLULAR LOCATION</scope>
</reference>
<reference key="22">
    <citation type="journal article" date="2022" name="Life. Sci Alliance">
        <title>The human RNA polymerase I structure reveals an HMG-like docking domain specific to metazoans.</title>
        <authorList>
            <person name="Daiss J.L."/>
            <person name="Pilsl M."/>
            <person name="Straub K."/>
            <person name="Bleckmann A."/>
            <person name="Hocherl M."/>
            <person name="Heiss F.B."/>
            <person name="Abascal-Palacios G."/>
            <person name="Ramsay E.P."/>
            <person name="Tluckova K."/>
            <person name="Mars J.C."/>
            <person name="Furtges T."/>
            <person name="Bruckmann A."/>
            <person name="Rudack T."/>
            <person name="Bernecky C."/>
            <person name="Lamour V."/>
            <person name="Panov K."/>
            <person name="Vannini A."/>
            <person name="Moss T."/>
            <person name="Engel C."/>
        </authorList>
    </citation>
    <scope>STRUCTURE BY ELECTRON MICROSCOPY (4.09 ANGSTROMS)</scope>
    <scope>FUNCTION OF POL I</scope>
    <scope>SUBUNIT</scope>
</reference>
<reference key="23">
    <citation type="journal article" date="2011" name="Nat. Genet.">
        <title>Mutations in genes encoding subunits of RNA polymerases I and III cause Treacher Collins syndrome.</title>
        <authorList>
            <person name="Dauwerse J.G."/>
            <person name="Dixon J."/>
            <person name="Seland S."/>
            <person name="Ruivenkamp C.A."/>
            <person name="van Haeringen A."/>
            <person name="Hoefsloot L.H."/>
            <person name="Peters D.J."/>
            <person name="Boers A.C."/>
            <person name="Daumer-Haas C."/>
            <person name="Maiwald R."/>
            <person name="Zweier C."/>
            <person name="Kerr B."/>
            <person name="Cobo A.M."/>
            <person name="Toral J.F."/>
            <person name="Hoogeboom A.J."/>
            <person name="Lohmann D.R."/>
            <person name="Hehr U."/>
            <person name="Dixon M.J."/>
            <person name="Breuning M.H."/>
            <person name="Wieczorek D."/>
        </authorList>
    </citation>
    <scope>VARIANTS TCS3 GLN-279 AND TRP-279</scope>
</reference>
<evidence type="ECO:0000250" key="1">
    <source>
        <dbReference type="UniProtKB" id="P07703"/>
    </source>
</evidence>
<evidence type="ECO:0000269" key="2">
    <source>
    </source>
</evidence>
<evidence type="ECO:0000269" key="3">
    <source>
    </source>
</evidence>
<evidence type="ECO:0000269" key="4">
    <source>
    </source>
</evidence>
<evidence type="ECO:0000269" key="5">
    <source>
    </source>
</evidence>
<evidence type="ECO:0000269" key="6">
    <source>
    </source>
</evidence>
<evidence type="ECO:0000269" key="7">
    <source>
    </source>
</evidence>
<evidence type="ECO:0000269" key="8">
    <source>
    </source>
</evidence>
<evidence type="ECO:0000269" key="9">
    <source>
    </source>
</evidence>
<evidence type="ECO:0000269" key="10">
    <source>
    </source>
</evidence>
<evidence type="ECO:0000269" key="11">
    <source>
    </source>
</evidence>
<evidence type="ECO:0000269" key="12">
    <source>
    </source>
</evidence>
<evidence type="ECO:0000269" key="13">
    <source>
    </source>
</evidence>
<evidence type="ECO:0000269" key="14">
    <source ref="5"/>
</evidence>
<evidence type="ECO:0000303" key="15">
    <source>
    </source>
</evidence>
<evidence type="ECO:0000305" key="16"/>
<evidence type="ECO:0000305" key="17">
    <source>
    </source>
</evidence>
<evidence type="ECO:0000312" key="18">
    <source>
        <dbReference type="HGNC" id="HGNC:20194"/>
    </source>
</evidence>
<evidence type="ECO:0007744" key="19">
    <source>
    </source>
</evidence>
<evidence type="ECO:0007744" key="20">
    <source>
    </source>
</evidence>
<evidence type="ECO:0007744" key="21">
    <source>
    </source>
</evidence>
<evidence type="ECO:0007744" key="22">
    <source>
    </source>
</evidence>
<evidence type="ECO:0007829" key="23">
    <source>
        <dbReference type="PDB" id="7AE1"/>
    </source>
</evidence>
<evidence type="ECO:0007829" key="24">
    <source>
        <dbReference type="PDB" id="7D58"/>
    </source>
</evidence>
<evidence type="ECO:0007829" key="25">
    <source>
        <dbReference type="PDB" id="7D59"/>
    </source>
</evidence>
<evidence type="ECO:0007829" key="26">
    <source>
        <dbReference type="PDB" id="7OB9"/>
    </source>
</evidence>
<evidence type="ECO:0007829" key="27">
    <source>
        <dbReference type="PDB" id="8IUH"/>
    </source>
</evidence>